<accession>P16333</accession>
<accession>B7Z751</accession>
<accession>D3DNE3</accession>
<reference key="1">
    <citation type="journal article" date="1990" name="Nucleic Acids Res.">
        <title>Nck, a melanoma cDNA encoding a cytoplasmic protein consisting of the src homology units SH2 and SH3.</title>
        <authorList>
            <person name="Lehmann J.M."/>
            <person name="Riethmueller G."/>
            <person name="Johnson J.P."/>
        </authorList>
    </citation>
    <scope>NUCLEOTIDE SEQUENCE [MRNA] (ISOFORM 1)</scope>
</reference>
<reference key="2">
    <citation type="journal article" date="2004" name="Nat. Genet.">
        <title>Complete sequencing and characterization of 21,243 full-length human cDNAs.</title>
        <authorList>
            <person name="Ota T."/>
            <person name="Suzuki Y."/>
            <person name="Nishikawa T."/>
            <person name="Otsuki T."/>
            <person name="Sugiyama T."/>
            <person name="Irie R."/>
            <person name="Wakamatsu A."/>
            <person name="Hayashi K."/>
            <person name="Sato H."/>
            <person name="Nagai K."/>
            <person name="Kimura K."/>
            <person name="Makita H."/>
            <person name="Sekine M."/>
            <person name="Obayashi M."/>
            <person name="Nishi T."/>
            <person name="Shibahara T."/>
            <person name="Tanaka T."/>
            <person name="Ishii S."/>
            <person name="Yamamoto J."/>
            <person name="Saito K."/>
            <person name="Kawai Y."/>
            <person name="Isono Y."/>
            <person name="Nakamura Y."/>
            <person name="Nagahari K."/>
            <person name="Murakami K."/>
            <person name="Yasuda T."/>
            <person name="Iwayanagi T."/>
            <person name="Wagatsuma M."/>
            <person name="Shiratori A."/>
            <person name="Sudo H."/>
            <person name="Hosoiri T."/>
            <person name="Kaku Y."/>
            <person name="Kodaira H."/>
            <person name="Kondo H."/>
            <person name="Sugawara M."/>
            <person name="Takahashi M."/>
            <person name="Kanda K."/>
            <person name="Yokoi T."/>
            <person name="Furuya T."/>
            <person name="Kikkawa E."/>
            <person name="Omura Y."/>
            <person name="Abe K."/>
            <person name="Kamihara K."/>
            <person name="Katsuta N."/>
            <person name="Sato K."/>
            <person name="Tanikawa M."/>
            <person name="Yamazaki M."/>
            <person name="Ninomiya K."/>
            <person name="Ishibashi T."/>
            <person name="Yamashita H."/>
            <person name="Murakawa K."/>
            <person name="Fujimori K."/>
            <person name="Tanai H."/>
            <person name="Kimata M."/>
            <person name="Watanabe M."/>
            <person name="Hiraoka S."/>
            <person name="Chiba Y."/>
            <person name="Ishida S."/>
            <person name="Ono Y."/>
            <person name="Takiguchi S."/>
            <person name="Watanabe S."/>
            <person name="Yosida M."/>
            <person name="Hotuta T."/>
            <person name="Kusano J."/>
            <person name="Kanehori K."/>
            <person name="Takahashi-Fujii A."/>
            <person name="Hara H."/>
            <person name="Tanase T.-O."/>
            <person name="Nomura Y."/>
            <person name="Togiya S."/>
            <person name="Komai F."/>
            <person name="Hara R."/>
            <person name="Takeuchi K."/>
            <person name="Arita M."/>
            <person name="Imose N."/>
            <person name="Musashino K."/>
            <person name="Yuuki H."/>
            <person name="Oshima A."/>
            <person name="Sasaki N."/>
            <person name="Aotsuka S."/>
            <person name="Yoshikawa Y."/>
            <person name="Matsunawa H."/>
            <person name="Ichihara T."/>
            <person name="Shiohata N."/>
            <person name="Sano S."/>
            <person name="Moriya S."/>
            <person name="Momiyama H."/>
            <person name="Satoh N."/>
            <person name="Takami S."/>
            <person name="Terashima Y."/>
            <person name="Suzuki O."/>
            <person name="Nakagawa S."/>
            <person name="Senoh A."/>
            <person name="Mizoguchi H."/>
            <person name="Goto Y."/>
            <person name="Shimizu F."/>
            <person name="Wakebe H."/>
            <person name="Hishigaki H."/>
            <person name="Watanabe T."/>
            <person name="Sugiyama A."/>
            <person name="Takemoto M."/>
            <person name="Kawakami B."/>
            <person name="Yamazaki M."/>
            <person name="Watanabe K."/>
            <person name="Kumagai A."/>
            <person name="Itakura S."/>
            <person name="Fukuzumi Y."/>
            <person name="Fujimori Y."/>
            <person name="Komiyama M."/>
            <person name="Tashiro H."/>
            <person name="Tanigami A."/>
            <person name="Fujiwara T."/>
            <person name="Ono T."/>
            <person name="Yamada K."/>
            <person name="Fujii Y."/>
            <person name="Ozaki K."/>
            <person name="Hirao M."/>
            <person name="Ohmori Y."/>
            <person name="Kawabata A."/>
            <person name="Hikiji T."/>
            <person name="Kobatake N."/>
            <person name="Inagaki H."/>
            <person name="Ikema Y."/>
            <person name="Okamoto S."/>
            <person name="Okitani R."/>
            <person name="Kawakami T."/>
            <person name="Noguchi S."/>
            <person name="Itoh T."/>
            <person name="Shigeta K."/>
            <person name="Senba T."/>
            <person name="Matsumura K."/>
            <person name="Nakajima Y."/>
            <person name="Mizuno T."/>
            <person name="Morinaga M."/>
            <person name="Sasaki M."/>
            <person name="Togashi T."/>
            <person name="Oyama M."/>
            <person name="Hata H."/>
            <person name="Watanabe M."/>
            <person name="Komatsu T."/>
            <person name="Mizushima-Sugano J."/>
            <person name="Satoh T."/>
            <person name="Shirai Y."/>
            <person name="Takahashi Y."/>
            <person name="Nakagawa K."/>
            <person name="Okumura K."/>
            <person name="Nagase T."/>
            <person name="Nomura N."/>
            <person name="Kikuchi H."/>
            <person name="Masuho Y."/>
            <person name="Yamashita R."/>
            <person name="Nakai K."/>
            <person name="Yada T."/>
            <person name="Nakamura Y."/>
            <person name="Ohara O."/>
            <person name="Isogai T."/>
            <person name="Sugano S."/>
        </authorList>
    </citation>
    <scope>NUCLEOTIDE SEQUENCE [LARGE SCALE MRNA] (ISOFORM 2)</scope>
    <source>
        <tissue>Synovium</tissue>
    </source>
</reference>
<reference key="3">
    <citation type="journal article" date="2006" name="Nature">
        <title>The DNA sequence, annotation and analysis of human chromosome 3.</title>
        <authorList>
            <person name="Muzny D.M."/>
            <person name="Scherer S.E."/>
            <person name="Kaul R."/>
            <person name="Wang J."/>
            <person name="Yu J."/>
            <person name="Sudbrak R."/>
            <person name="Buhay C.J."/>
            <person name="Chen R."/>
            <person name="Cree A."/>
            <person name="Ding Y."/>
            <person name="Dugan-Rocha S."/>
            <person name="Gill R."/>
            <person name="Gunaratne P."/>
            <person name="Harris R.A."/>
            <person name="Hawes A.C."/>
            <person name="Hernandez J."/>
            <person name="Hodgson A.V."/>
            <person name="Hume J."/>
            <person name="Jackson A."/>
            <person name="Khan Z.M."/>
            <person name="Kovar-Smith C."/>
            <person name="Lewis L.R."/>
            <person name="Lozado R.J."/>
            <person name="Metzker M.L."/>
            <person name="Milosavljevic A."/>
            <person name="Miner G.R."/>
            <person name="Morgan M.B."/>
            <person name="Nazareth L.V."/>
            <person name="Scott G."/>
            <person name="Sodergren E."/>
            <person name="Song X.-Z."/>
            <person name="Steffen D."/>
            <person name="Wei S."/>
            <person name="Wheeler D.A."/>
            <person name="Wright M.W."/>
            <person name="Worley K.C."/>
            <person name="Yuan Y."/>
            <person name="Zhang Z."/>
            <person name="Adams C.Q."/>
            <person name="Ansari-Lari M.A."/>
            <person name="Ayele M."/>
            <person name="Brown M.J."/>
            <person name="Chen G."/>
            <person name="Chen Z."/>
            <person name="Clendenning J."/>
            <person name="Clerc-Blankenburg K.P."/>
            <person name="Chen R."/>
            <person name="Chen Z."/>
            <person name="Davis C."/>
            <person name="Delgado O."/>
            <person name="Dinh H.H."/>
            <person name="Dong W."/>
            <person name="Draper H."/>
            <person name="Ernst S."/>
            <person name="Fu G."/>
            <person name="Gonzalez-Garay M.L."/>
            <person name="Garcia D.K."/>
            <person name="Gillett W."/>
            <person name="Gu J."/>
            <person name="Hao B."/>
            <person name="Haugen E."/>
            <person name="Havlak P."/>
            <person name="He X."/>
            <person name="Hennig S."/>
            <person name="Hu S."/>
            <person name="Huang W."/>
            <person name="Jackson L.R."/>
            <person name="Jacob L.S."/>
            <person name="Kelly S.H."/>
            <person name="Kube M."/>
            <person name="Levy R."/>
            <person name="Li Z."/>
            <person name="Liu B."/>
            <person name="Liu J."/>
            <person name="Liu W."/>
            <person name="Lu J."/>
            <person name="Maheshwari M."/>
            <person name="Nguyen B.-V."/>
            <person name="Okwuonu G.O."/>
            <person name="Palmeiri A."/>
            <person name="Pasternak S."/>
            <person name="Perez L.M."/>
            <person name="Phelps K.A."/>
            <person name="Plopper F.J."/>
            <person name="Qiang B."/>
            <person name="Raymond C."/>
            <person name="Rodriguez R."/>
            <person name="Saenphimmachak C."/>
            <person name="Santibanez J."/>
            <person name="Shen H."/>
            <person name="Shen Y."/>
            <person name="Subramanian S."/>
            <person name="Tabor P.E."/>
            <person name="Verduzco D."/>
            <person name="Waldron L."/>
            <person name="Wang J."/>
            <person name="Wang J."/>
            <person name="Wang Q."/>
            <person name="Williams G.A."/>
            <person name="Wong G.K.-S."/>
            <person name="Yao Z."/>
            <person name="Zhang J."/>
            <person name="Zhang X."/>
            <person name="Zhao G."/>
            <person name="Zhou J."/>
            <person name="Zhou Y."/>
            <person name="Nelson D."/>
            <person name="Lehrach H."/>
            <person name="Reinhardt R."/>
            <person name="Naylor S.L."/>
            <person name="Yang H."/>
            <person name="Olson M."/>
            <person name="Weinstock G."/>
            <person name="Gibbs R.A."/>
        </authorList>
    </citation>
    <scope>NUCLEOTIDE SEQUENCE [LARGE SCALE GENOMIC DNA]</scope>
</reference>
<reference key="4">
    <citation type="submission" date="2005-09" db="EMBL/GenBank/DDBJ databases">
        <authorList>
            <person name="Mural R.J."/>
            <person name="Istrail S."/>
            <person name="Sutton G.G."/>
            <person name="Florea L."/>
            <person name="Halpern A.L."/>
            <person name="Mobarry C.M."/>
            <person name="Lippert R."/>
            <person name="Walenz B."/>
            <person name="Shatkay H."/>
            <person name="Dew I."/>
            <person name="Miller J.R."/>
            <person name="Flanigan M.J."/>
            <person name="Edwards N.J."/>
            <person name="Bolanos R."/>
            <person name="Fasulo D."/>
            <person name="Halldorsson B.V."/>
            <person name="Hannenhalli S."/>
            <person name="Turner R."/>
            <person name="Yooseph S."/>
            <person name="Lu F."/>
            <person name="Nusskern D.R."/>
            <person name="Shue B.C."/>
            <person name="Zheng X.H."/>
            <person name="Zhong F."/>
            <person name="Delcher A.L."/>
            <person name="Huson D.H."/>
            <person name="Kravitz S.A."/>
            <person name="Mouchard L."/>
            <person name="Reinert K."/>
            <person name="Remington K.A."/>
            <person name="Clark A.G."/>
            <person name="Waterman M.S."/>
            <person name="Eichler E.E."/>
            <person name="Adams M.D."/>
            <person name="Hunkapiller M.W."/>
            <person name="Myers E.W."/>
            <person name="Venter J.C."/>
        </authorList>
    </citation>
    <scope>NUCLEOTIDE SEQUENCE [LARGE SCALE GENOMIC DNA]</scope>
</reference>
<reference key="5">
    <citation type="journal article" date="2004" name="Genome Res.">
        <title>The status, quality, and expansion of the NIH full-length cDNA project: the Mammalian Gene Collection (MGC).</title>
        <authorList>
            <consortium name="The MGC Project Team"/>
        </authorList>
    </citation>
    <scope>NUCLEOTIDE SEQUENCE [LARGE SCALE MRNA] (ISOFORM 1)</scope>
    <source>
        <tissue>Uterus</tissue>
    </source>
</reference>
<reference key="6">
    <citation type="journal article" date="1992" name="Mol. Cell. Biol.">
        <title>Phosphorylation of Nck in response to a variety of receptors, phorbol myristate acetate, and cyclic AMP.</title>
        <authorList>
            <person name="Park D."/>
            <person name="Rhee S.G."/>
        </authorList>
    </citation>
    <scope>PHOSPHORYLATION</scope>
    <scope>PARTIAL PROTEIN SEQUENCE</scope>
</reference>
<reference key="7">
    <citation type="journal article" date="1992" name="Mol. Cell. Biol.">
        <title>The SH2/SH3 domain-containing protein Nck is recognized by certain anti-phospholipase C-gamma 1 monoclonal antibodies, and its phosphorylation on tyrosine is stimulated by platelet-derived growth factor and epidermal growth factor treatment.</title>
        <authorList>
            <person name="Meisenhelder J."/>
            <person name="Hunter T."/>
        </authorList>
    </citation>
    <scope>PHOSPHORYLATION</scope>
</reference>
<reference key="8">
    <citation type="journal article" date="1993" name="Proc. Natl. Acad. Sci. U.S.A.">
        <title>Nck associates with the SH2 domain-docking protein IRS-1 in insulin-stimulated cells.</title>
        <authorList>
            <person name="Lee C.H."/>
            <person name="Li W."/>
            <person name="Nishimura R."/>
            <person name="Zhou M."/>
            <person name="Batzer A.G."/>
            <person name="Myers M.G. Jr."/>
            <person name="White M.F."/>
            <person name="Schlessinger J."/>
            <person name="Skolnik E.Y."/>
        </authorList>
    </citation>
    <scope>INTERACTION WITH IRS1</scope>
</reference>
<reference key="9">
    <citation type="journal article" date="1993" name="Mol. Cell. Biol.">
        <title>Two signaling molecules share a phosphotyrosine-containing binding site in the platelet-derived growth factor receptor.</title>
        <authorList>
            <person name="Nishimura R."/>
            <person name="Li W."/>
            <person name="Kashishian A."/>
            <person name="Mondino A."/>
            <person name="Zhou M."/>
            <person name="Cooper J."/>
            <person name="Schlessinger J."/>
        </authorList>
    </citation>
    <scope>INTERACTION WITH PDGFRB</scope>
    <scope>PHOSPHORYLATION</scope>
</reference>
<reference key="10">
    <citation type="journal article" date="1997" name="Biochem. Biophys. Res. Commun.">
        <title>A novel ligand for an SH3 domain of the adaptor protein Nck bears an SH2 domain and nuclear signaling motifs.</title>
        <authorList>
            <person name="Matuoka K."/>
            <person name="Miki H."/>
            <person name="Takahashi K."/>
            <person name="Takenawa T."/>
        </authorList>
    </citation>
    <scope>INTERACTION WITH SOCS7</scope>
</reference>
<reference key="11">
    <citation type="journal article" date="1998" name="Biochem. Biophys. Res. Commun.">
        <title>Tyrosine 1213 of Flt-1 is a major binding site of Nck and SHP-2.</title>
        <authorList>
            <person name="Igarashi K."/>
            <person name="Isohara T."/>
            <person name="Kato T."/>
            <person name="Shigeta K."/>
            <person name="Yamano T."/>
            <person name="Uno I."/>
        </authorList>
    </citation>
    <scope>INTERACTION WITH FLT1</scope>
</reference>
<reference key="12">
    <citation type="journal article" date="1998" name="Immunity">
        <title>BLNK: a central linker protein in B cell activation.</title>
        <authorList>
            <person name="Fu C."/>
            <person name="Turck C.W."/>
            <person name="Kurosaki T."/>
            <person name="Chan A.C."/>
        </authorList>
    </citation>
    <scope>INTERACTION WITH BLNK; GRB2; PLCG1 AND VAV</scope>
</reference>
<reference key="13">
    <citation type="journal article" date="1998" name="J. Biol. Chem.">
        <title>Nck recruitment to Eph receptor, EphB1/ELK, couples ligand activation to c-Jun kinase.</title>
        <authorList>
            <person name="Stein E."/>
            <person name="Huynh-Do U."/>
            <person name="Lane A.A."/>
            <person name="Cerretti D.P."/>
            <person name="Daniel T.O."/>
        </authorList>
    </citation>
    <scope>FUNCTION IN CELL ADHESION</scope>
    <scope>INTERACTION WITH EPHB1</scope>
    <source>
        <tissue>Kidney</tissue>
    </source>
</reference>
<reference key="14">
    <citation type="journal article" date="1999" name="J. Biol. Chem.">
        <title>Identification of Grb4/Nckbeta, a src homology 2 and 3 domain-containing adapter protein having similar binding and biological properties to Nck.</title>
        <authorList>
            <person name="Braverman L.E."/>
            <person name="Quilliam L.A."/>
        </authorList>
    </citation>
    <scope>FUNCTION</scope>
    <scope>INTERACTION WITH EGFR; PAK1; PKN2 AND SOS1</scope>
    <scope>PHOSPHORYLATION</scope>
</reference>
<reference key="15">
    <citation type="journal article" date="2000" name="J. Biol. Chem.">
        <title>Identification and characterization of a new family of guanine nucleotide exchange factors for the ras-related GTPase Ral.</title>
        <authorList>
            <person name="Rebhun J.F."/>
            <person name="Chen H."/>
            <person name="Quilliam L.A."/>
        </authorList>
    </citation>
    <scope>INTERACTION WITH RALGPS1</scope>
</reference>
<reference key="16">
    <citation type="journal article" date="2002" name="J. Biol. Chem.">
        <title>Src-induced phosphorylation of caveolin-2 on tyrosine 19. Phospho-caveolin-2 (Tyr(P)19) is localized near focal adhesions, remains associated with lipid rafts/caveolae, but no longer forms a high molecular mass hetero-oligomer with caveolin-1.</title>
        <authorList>
            <person name="Lee H."/>
            <person name="Park D.S."/>
            <person name="Wang X.B."/>
            <person name="Scherer P.E."/>
            <person name="Schwartz P.E."/>
            <person name="Lisanti M.P."/>
        </authorList>
    </citation>
    <scope>INTERACTION WITH CAV2</scope>
</reference>
<reference key="17">
    <citation type="journal article" date="2004" name="Biochemistry">
        <title>Tyrosine phosphorylation of caveolin-2 at residue 27: differences in the spatial and temporal behavior of phospho-Cav-2 (pY19 and pY27).</title>
        <authorList>
            <person name="Wang X.B."/>
            <person name="Lee H."/>
            <person name="Capozza F."/>
            <person name="Marmon S."/>
            <person name="Sotgia F."/>
            <person name="Brooks J.W."/>
            <person name="Campos-Gonzalez R."/>
            <person name="Lisanti M.P."/>
        </authorList>
    </citation>
    <scope>INTERACTION WITH CAV2</scope>
</reference>
<reference key="18">
    <citation type="journal article" date="2004" name="J. Biol. Chem.">
        <title>Identification and functional characterization of a novel human misshapen/Nck interacting kinase-related kinase, hMINK beta.</title>
        <authorList>
            <person name="Hu Y."/>
            <person name="Leo C."/>
            <person name="Yu S."/>
            <person name="Huang B.C."/>
            <person name="Wang H."/>
            <person name="Shen M."/>
            <person name="Luo Y."/>
            <person name="Daniel-Issakani S."/>
            <person name="Payan D.G."/>
            <person name="Xu X."/>
        </authorList>
    </citation>
    <scope>INTERACTION WITH MINK1</scope>
</reference>
<reference key="19">
    <citation type="journal article" date="2006" name="Cell">
        <title>Global, in vivo, and site-specific phosphorylation dynamics in signaling networks.</title>
        <authorList>
            <person name="Olsen J.V."/>
            <person name="Blagoev B."/>
            <person name="Gnad F."/>
            <person name="Macek B."/>
            <person name="Kumar C."/>
            <person name="Mortensen P."/>
            <person name="Mann M."/>
        </authorList>
    </citation>
    <scope>IDENTIFICATION BY MASS SPECTROMETRY [LARGE SCALE ANALYSIS]</scope>
    <source>
        <tissue>Cervix carcinoma</tissue>
    </source>
</reference>
<reference key="20">
    <citation type="journal article" date="2006" name="J. Biol. Chem.">
        <title>Nck in a complex containing the catalytic subunit of protein phosphatase 1 regulates eukaryotic initiation factor 2alpha signaling and cell survival to endoplasmic reticulum stress.</title>
        <authorList>
            <person name="Latreille M."/>
            <person name="Larose L."/>
        </authorList>
    </citation>
    <scope>IDENTIFICATION IN COMPLEX WITH PP1 AND PPP1R15B</scope>
    <scope>FUNCTION</scope>
    <scope>SUBCELLULAR LOCATION</scope>
</reference>
<reference key="21">
    <citation type="journal article" date="2006" name="J. Biol. Chem.">
        <title>Phosphorylation of Tyr1214 within VEGFR-2 triggers the recruitment of Nck and activation of Fyn leading to SAPK2/p38 activation and endothelial cell migration in response to VEGF.</title>
        <authorList>
            <person name="Lamalice L."/>
            <person name="Houle F."/>
            <person name="Huot J."/>
        </authorList>
    </citation>
    <scope>INTERACTION WITH KDR</scope>
</reference>
<reference key="22">
    <citation type="journal article" date="2007" name="Cell">
        <title>Septins regulate actin organization and cell-cycle arrest through nuclear accumulation of NCK mediated by SOCS7.</title>
        <authorList>
            <person name="Kremer B.E."/>
            <person name="Adang L.A."/>
            <person name="Macara I.G."/>
        </authorList>
    </citation>
    <scope>FUNCTION</scope>
    <scope>SUBCELLULAR LOCATION</scope>
    <scope>INTERACTION WITH SOCS7</scope>
</reference>
<reference key="23">
    <citation type="journal article" date="2008" name="Biochem. Biophys. Res. Commun.">
        <title>Nck-1 interacts with PKR and modulates its activation by dsRNA.</title>
        <authorList>
            <person name="Cardin E."/>
            <person name="Larose L."/>
        </authorList>
    </citation>
    <scope>FUNCTION</scope>
    <scope>INTERACTION WITH EIF2AK2</scope>
    <scope>PHOSPHORYLATION</scope>
</reference>
<reference key="24">
    <citation type="journal article" date="2008" name="J. Proteome Res.">
        <title>Phosphoproteome of resting human platelets.</title>
        <authorList>
            <person name="Zahedi R.P."/>
            <person name="Lewandrowski U."/>
            <person name="Wiesner J."/>
            <person name="Wortelkamp S."/>
            <person name="Moebius J."/>
            <person name="Schuetz C."/>
            <person name="Walter U."/>
            <person name="Gambaryan S."/>
            <person name="Sickmann A."/>
        </authorList>
    </citation>
    <scope>PHOSPHORYLATION [LARGE SCALE ANALYSIS] AT TYR-105</scope>
    <scope>IDENTIFICATION BY MASS SPECTROMETRY [LARGE SCALE ANALYSIS]</scope>
    <source>
        <tissue>Platelet</tissue>
    </source>
</reference>
<reference key="25">
    <citation type="journal article" date="2008" name="Mol. Cancer Res.">
        <title>Distinct functions of natural ADAM-15 cytoplasmic domain variants in human mammary carcinoma.</title>
        <authorList>
            <person name="Zhong J.L."/>
            <person name="Poghosyan Z."/>
            <person name="Pennington C.J."/>
            <person name="Scott X."/>
            <person name="Handsley M.M."/>
            <person name="Warn A."/>
            <person name="Gavrilovic J."/>
            <person name="Honert K."/>
            <person name="Kruger A."/>
            <person name="Span P.N."/>
            <person name="Sweep F.C."/>
            <person name="Edwards D.R."/>
        </authorList>
    </citation>
    <scope>INTERACTION WITH ADAM15</scope>
</reference>
<reference key="26">
    <citation type="journal article" date="2008" name="Proc. Natl. Acad. Sci. U.S.A.">
        <title>A quantitative atlas of mitotic phosphorylation.</title>
        <authorList>
            <person name="Dephoure N."/>
            <person name="Zhou C."/>
            <person name="Villen J."/>
            <person name="Beausoleil S.A."/>
            <person name="Bakalarski C.E."/>
            <person name="Elledge S.J."/>
            <person name="Gygi S.P."/>
        </authorList>
    </citation>
    <scope>PHOSPHORYLATION [LARGE SCALE ANALYSIS] AT SER-85; SER-91 AND SER-96</scope>
    <scope>IDENTIFICATION BY MASS SPECTROMETRY [LARGE SCALE ANALYSIS]</scope>
    <source>
        <tissue>Cervix carcinoma</tissue>
    </source>
</reference>
<reference key="27">
    <citation type="journal article" date="2009" name="BMC Immunol.">
        <title>Identification of SH3 domain interaction partners of human FasL (CD178) by phage display screening.</title>
        <authorList>
            <person name="Voss M."/>
            <person name="Lettau M."/>
            <person name="Janssen O."/>
        </authorList>
    </citation>
    <scope>INTERACTION WITH FASLG</scope>
</reference>
<reference key="28">
    <citation type="journal article" date="2009" name="Sci. Signal.">
        <title>Quantitative phosphoproteomic analysis of T cell receptor signaling reveals system-wide modulation of protein-protein interactions.</title>
        <authorList>
            <person name="Mayya V."/>
            <person name="Lundgren D.H."/>
            <person name="Hwang S.-I."/>
            <person name="Rezaul K."/>
            <person name="Wu L."/>
            <person name="Eng J.K."/>
            <person name="Rodionov V."/>
            <person name="Han D.K."/>
        </authorList>
    </citation>
    <scope>PHOSPHORYLATION [LARGE SCALE ANALYSIS] AT SER-85 AND TYR-105</scope>
    <scope>IDENTIFICATION BY MASS SPECTROMETRY [LARGE SCALE ANALYSIS]</scope>
    <source>
        <tissue>Leukemic T-cell</tissue>
    </source>
</reference>
<reference key="29">
    <citation type="journal article" date="2010" name="Sci. Signal.">
        <title>Quantitative phosphoproteomics reveals widespread full phosphorylation site occupancy during mitosis.</title>
        <authorList>
            <person name="Olsen J.V."/>
            <person name="Vermeulen M."/>
            <person name="Santamaria A."/>
            <person name="Kumar C."/>
            <person name="Miller M.L."/>
            <person name="Jensen L.J."/>
            <person name="Gnad F."/>
            <person name="Cox J."/>
            <person name="Jensen T.S."/>
            <person name="Nigg E.A."/>
            <person name="Brunak S."/>
            <person name="Mann M."/>
        </authorList>
    </citation>
    <scope>PHOSPHORYLATION [LARGE SCALE ANALYSIS] AT TYR-105</scope>
    <scope>IDENTIFICATION BY MASS SPECTROMETRY [LARGE SCALE ANALYSIS]</scope>
    <source>
        <tissue>Cervix carcinoma</tissue>
    </source>
</reference>
<reference key="30">
    <citation type="journal article" date="2011" name="Biochem. J.">
        <title>Dock/Nck facilitates PTP61F/PTP1B regulation of insulin signalling.</title>
        <authorList>
            <person name="Wu C.L."/>
            <person name="Buszard B."/>
            <person name="Teng C.H."/>
            <person name="Chen W.L."/>
            <person name="Warr C.G."/>
            <person name="Tiganis T."/>
            <person name="Meng T.C."/>
        </authorList>
    </citation>
    <scope>INTERACTION WITH PTPN1 AND INSR</scope>
</reference>
<reference key="31">
    <citation type="journal article" date="2011" name="BMC Syst. Biol.">
        <title>Initial characterization of the human central proteome.</title>
        <authorList>
            <person name="Burkard T.R."/>
            <person name="Planyavsky M."/>
            <person name="Kaupe I."/>
            <person name="Breitwieser F.P."/>
            <person name="Buerckstuemmer T."/>
            <person name="Bennett K.L."/>
            <person name="Superti-Furga G."/>
            <person name="Colinge J."/>
        </authorList>
    </citation>
    <scope>IDENTIFICATION BY MASS SPECTROMETRY [LARGE SCALE ANALYSIS]</scope>
</reference>
<reference key="32">
    <citation type="journal article" date="2011" name="Cell. Signal.">
        <title>Adaptor protein Nck1 interacts with p120 Ras GTPase-activating protein and regulates its activity.</title>
        <authorList>
            <person name="Ger M."/>
            <person name="Zitkus Z."/>
            <person name="Valius M."/>
        </authorList>
    </citation>
    <scope>INTERACTION WITH RASA1</scope>
    <scope>MUTAGENESIS OF TRP-38; TRP-143; TRP-229 AND ARG-308</scope>
</reference>
<reference key="33">
    <citation type="journal article" date="2012" name="Mol. Cell. Proteomics">
        <title>Comparative large-scale characterisation of plant vs. mammal proteins reveals similar and idiosyncratic N-alpha acetylation features.</title>
        <authorList>
            <person name="Bienvenut W.V."/>
            <person name="Sumpton D."/>
            <person name="Martinez A."/>
            <person name="Lilla S."/>
            <person name="Espagne C."/>
            <person name="Meinnel T."/>
            <person name="Giglione C."/>
        </authorList>
    </citation>
    <scope>ACETYLATION [LARGE SCALE ANALYSIS] AT ALA-2</scope>
    <scope>CLEAVAGE OF INITIATOR METHIONINE [LARGE SCALE ANALYSIS]</scope>
    <scope>IDENTIFICATION BY MASS SPECTROMETRY [LARGE SCALE ANALYSIS]</scope>
</reference>
<reference key="34">
    <citation type="journal article" date="2012" name="Proc. Natl. Acad. Sci. U.S.A.">
        <title>N-terminal acetylome analyses and functional insights of the N-terminal acetyltransferase NatB.</title>
        <authorList>
            <person name="Van Damme P."/>
            <person name="Lasa M."/>
            <person name="Polevoda B."/>
            <person name="Gazquez C."/>
            <person name="Elosegui-Artola A."/>
            <person name="Kim D.S."/>
            <person name="De Juan-Pardo E."/>
            <person name="Demeyer K."/>
            <person name="Hole K."/>
            <person name="Larrea E."/>
            <person name="Timmerman E."/>
            <person name="Prieto J."/>
            <person name="Arnesen T."/>
            <person name="Sherman F."/>
            <person name="Gevaert K."/>
            <person name="Aldabe R."/>
        </authorList>
    </citation>
    <scope>ACETYLATION [LARGE SCALE ANALYSIS] AT ALA-2</scope>
    <scope>CLEAVAGE OF INITIATOR METHIONINE [LARGE SCALE ANALYSIS]</scope>
    <scope>IDENTIFICATION BY MASS SPECTROMETRY [LARGE SCALE ANALYSIS]</scope>
</reference>
<reference key="35">
    <citation type="journal article" date="2013" name="J. Proteome Res.">
        <title>Toward a comprehensive characterization of a human cancer cell phosphoproteome.</title>
        <authorList>
            <person name="Zhou H."/>
            <person name="Di Palma S."/>
            <person name="Preisinger C."/>
            <person name="Peng M."/>
            <person name="Polat A.N."/>
            <person name="Heck A.J."/>
            <person name="Mohammed S."/>
        </authorList>
    </citation>
    <scope>PHOSPHORYLATION [LARGE SCALE ANALYSIS] AT SER-85; SER-91; SER-96 AND SER-166</scope>
    <scope>IDENTIFICATION BY MASS SPECTROMETRY [LARGE SCALE ANALYSIS]</scope>
    <source>
        <tissue>Cervix carcinoma</tissue>
        <tissue>Erythroleukemia</tissue>
    </source>
</reference>
<reference key="36">
    <citation type="journal article" date="2013" name="Mol. Cell. Biol.">
        <title>Receptor protein tyrosine phosphatase-receptor tyrosine kinase substrate screen identifies EphA2 as a target for LAR in cell migration.</title>
        <authorList>
            <person name="Lee H."/>
            <person name="Bennett A.M."/>
        </authorList>
    </citation>
    <scope>FUNCTION IN CELL MIGRATION</scope>
    <scope>INTERACTION WITH EPHA2</scope>
</reference>
<reference key="37">
    <citation type="journal article" date="2014" name="J. Proteomics">
        <title>An enzyme assisted RP-RPLC approach for in-depth analysis of human liver phosphoproteome.</title>
        <authorList>
            <person name="Bian Y."/>
            <person name="Song C."/>
            <person name="Cheng K."/>
            <person name="Dong M."/>
            <person name="Wang F."/>
            <person name="Huang J."/>
            <person name="Sun D."/>
            <person name="Wang L."/>
            <person name="Ye M."/>
            <person name="Zou H."/>
        </authorList>
    </citation>
    <scope>PHOSPHORYLATION [LARGE SCALE ANALYSIS] AT SER-85; SER-89 AND SER-166</scope>
    <scope>IDENTIFICATION BY MASS SPECTROMETRY [LARGE SCALE ANALYSIS]</scope>
    <source>
        <tissue>Liver</tissue>
    </source>
</reference>
<reference key="38">
    <citation type="submission" date="2005-11" db="PDB data bank">
        <title>Solution structure of the SH3 domain of the human cytoplasmic protein NCK1.</title>
        <authorList>
            <consortium name="RIKEN structural genomics initiative (RSGI)"/>
        </authorList>
    </citation>
    <scope>STRUCTURE BY NMR OF 99-174</scope>
</reference>
<reference key="39">
    <citation type="journal article" date="2008" name="Biochemistry">
        <title>Specificity determinants of a novel Nck interaction with the juxtamembrane domain of the epidermal growth factor receptor.</title>
        <authorList>
            <person name="Hake M.J."/>
            <person name="Choowongkomon K."/>
            <person name="Kostenko O."/>
            <person name="Carlin C.R."/>
            <person name="Sonnichsen F.D."/>
        </authorList>
    </citation>
    <scope>STRUCTURE BY NMR OF 1-61 AND 107-165</scope>
    <scope>INTERACTION WITH EGFR</scope>
</reference>
<evidence type="ECO:0000255" key="1">
    <source>
        <dbReference type="PROSITE-ProRule" id="PRU00191"/>
    </source>
</evidence>
<evidence type="ECO:0000255" key="2">
    <source>
        <dbReference type="PROSITE-ProRule" id="PRU00192"/>
    </source>
</evidence>
<evidence type="ECO:0000269" key="3">
    <source>
    </source>
</evidence>
<evidence type="ECO:0000269" key="4">
    <source>
    </source>
</evidence>
<evidence type="ECO:0000269" key="5">
    <source>
    </source>
</evidence>
<evidence type="ECO:0000269" key="6">
    <source>
    </source>
</evidence>
<evidence type="ECO:0000269" key="7">
    <source>
    </source>
</evidence>
<evidence type="ECO:0000269" key="8">
    <source>
    </source>
</evidence>
<evidence type="ECO:0000269" key="9">
    <source>
    </source>
</evidence>
<evidence type="ECO:0000269" key="10">
    <source>
    </source>
</evidence>
<evidence type="ECO:0000269" key="11">
    <source>
    </source>
</evidence>
<evidence type="ECO:0000269" key="12">
    <source>
    </source>
</evidence>
<evidence type="ECO:0000269" key="13">
    <source>
    </source>
</evidence>
<evidence type="ECO:0000269" key="14">
    <source>
    </source>
</evidence>
<evidence type="ECO:0000269" key="15">
    <source>
    </source>
</evidence>
<evidence type="ECO:0000269" key="16">
    <source>
    </source>
</evidence>
<evidence type="ECO:0000269" key="17">
    <source>
    </source>
</evidence>
<evidence type="ECO:0000269" key="18">
    <source>
    </source>
</evidence>
<evidence type="ECO:0000269" key="19">
    <source>
    </source>
</evidence>
<evidence type="ECO:0000269" key="20">
    <source>
    </source>
</evidence>
<evidence type="ECO:0000269" key="21">
    <source>
    </source>
</evidence>
<evidence type="ECO:0000269" key="22">
    <source>
    </source>
</evidence>
<evidence type="ECO:0000269" key="23">
    <source>
    </source>
</evidence>
<evidence type="ECO:0000269" key="24">
    <source>
    </source>
</evidence>
<evidence type="ECO:0000269" key="25">
    <source>
    </source>
</evidence>
<evidence type="ECO:0000303" key="26">
    <source>
    </source>
</evidence>
<evidence type="ECO:0000305" key="27"/>
<evidence type="ECO:0007744" key="28">
    <source>
    </source>
</evidence>
<evidence type="ECO:0007744" key="29">
    <source>
    </source>
</evidence>
<evidence type="ECO:0007744" key="30">
    <source>
    </source>
</evidence>
<evidence type="ECO:0007744" key="31">
    <source>
    </source>
</evidence>
<evidence type="ECO:0007744" key="32">
    <source>
    </source>
</evidence>
<evidence type="ECO:0007744" key="33">
    <source>
    </source>
</evidence>
<evidence type="ECO:0007744" key="34">
    <source>
    </source>
</evidence>
<evidence type="ECO:0007744" key="35">
    <source>
    </source>
</evidence>
<evidence type="ECO:0007829" key="36">
    <source>
        <dbReference type="PDB" id="2CI9"/>
    </source>
</evidence>
<evidence type="ECO:0007829" key="37">
    <source>
        <dbReference type="PDB" id="2CUB"/>
    </source>
</evidence>
<evidence type="ECO:0007829" key="38">
    <source>
        <dbReference type="PDB" id="5QU2"/>
    </source>
</evidence>
<evidence type="ECO:0007829" key="39">
    <source>
        <dbReference type="PDB" id="5QU8"/>
    </source>
</evidence>
<name>NCK1_HUMAN</name>
<protein>
    <recommendedName>
        <fullName evidence="27">SH2/SH3 adapter protein NCK1</fullName>
    </recommendedName>
    <alternativeName>
        <fullName>Cytoplasmic protein NCK1</fullName>
    </alternativeName>
    <alternativeName>
        <fullName>NCK adapter protein 1</fullName>
        <shortName>Nck-1</shortName>
    </alternativeName>
    <alternativeName>
        <fullName>SH2/SH3 adapter protein NCK-alpha</fullName>
    </alternativeName>
</protein>
<keyword id="KW-0002">3D-structure</keyword>
<keyword id="KW-0007">Acetylation</keyword>
<keyword id="KW-0025">Alternative splicing</keyword>
<keyword id="KW-0963">Cytoplasm</keyword>
<keyword id="KW-0903">Direct protein sequencing</keyword>
<keyword id="KW-0256">Endoplasmic reticulum</keyword>
<keyword id="KW-0539">Nucleus</keyword>
<keyword id="KW-0597">Phosphoprotein</keyword>
<keyword id="KW-1267">Proteomics identification</keyword>
<keyword id="KW-1185">Reference proteome</keyword>
<keyword id="KW-0677">Repeat</keyword>
<keyword id="KW-0727">SH2 domain</keyword>
<keyword id="KW-0728">SH3 domain</keyword>
<keyword id="KW-0810">Translation regulation</keyword>
<proteinExistence type="evidence at protein level"/>
<gene>
    <name type="primary">NCK1</name>
    <name type="synonym">NCK</name>
</gene>
<comment type="function">
    <text evidence="3 10 12 15 19 23">Adapter protein which associates with tyrosine-phosphorylated growth factor receptors, such as KDR and PDGFRB, or their cellular substrates. Maintains low levels of EIF2S1 phosphorylation by promoting its dephosphorylation by PP1. Plays a role in the DNA damage response, not in the detection of the damage by ATM/ATR, but for efficient activation of downstream effectors, such as that of CHEK2. Plays a role in ELK1-dependent transcriptional activation in response to activated Ras signaling. Modulates the activation of EIF2AK2/PKR by dsRNA. May play a role in cell adhesion and migration through interaction with ephrin receptors.</text>
</comment>
<comment type="subunit">
    <text evidence="3 4 5 8 9 10 11 12 13 14 15 16 17 18 19 20 21 22 23 24 25">Interacts (via SH2 domain and SH3 domain 2) with EGFR. Interacts with PAK1 and SOS1. Interacts (via SH3 domains) with PKN2. Associates with BLNK, PLCG1, VAV1 and NCK1 in a B-cell antigen receptor-dependent fashion. Interacts with SOCS7. This interaction is required for nuclear import. Part of a complex containing PPP1R15B, PP1 and NCK1. Interacts with RALGPS1. Interacts with CAV2 (tyrosine phosphorylated form). Interacts with ADAM15. Interacts with FASLG. Directly interacts with RASA1. Interacts with isoform 4 of MINK1. Interacts with FLT1 (tyrosine phosphorylated). Interacts with KDR (tyrosine phosphorylated). Interacts (via SH2 domain) with EPHB1; activates the JUN cascade to regulate cell adhesion. Interacts with EPHA2. Interacts (via SH2 domain) with PDGFRB (tyrosine phosphorylated). Interacts with the inactive form of EIF2AK2/PKR. Interacts with PTPN1 (PubMed:21707536). Interacts with INSR/insulin receptor (in response to insulin stimulation); This interaction may mediate PTPN1 recruitment leading to INSR dephosphorylation (PubMed:21707536). Interacts with IRS1 (PubMed:8265614).</text>
</comment>
<comment type="interaction">
    <interactant intactId="EBI-389883">
        <id>P16333</id>
    </interactant>
    <interactant intactId="EBI-1761423">
        <id>Q9H222</id>
        <label>ABCG5</label>
    </interactant>
    <organismsDiffer>false</organismsDiffer>
    <experiments>2</experiments>
</comment>
<comment type="interaction">
    <interactant intactId="EBI-389883">
        <id>P16333</id>
    </interactant>
    <interactant intactId="EBI-375446">
        <id>Q8IZP0</id>
        <label>ABI1</label>
    </interactant>
    <organismsDiffer>false</organismsDiffer>
    <experiments>2</experiments>
</comment>
<comment type="interaction">
    <interactant intactId="EBI-389883">
        <id>P16333</id>
    </interactant>
    <interactant intactId="EBI-375543">
        <id>P00519</id>
        <label>ABL1</label>
    </interactant>
    <organismsDiffer>false</organismsDiffer>
    <experiments>2</experiments>
</comment>
<comment type="interaction">
    <interactant intactId="EBI-389883">
        <id>P16333</id>
    </interactant>
    <interactant intactId="EBI-1102694">
        <id>P42684</id>
        <label>ABL2</label>
    </interactant>
    <organismsDiffer>false</organismsDiffer>
    <experiments>5</experiments>
</comment>
<comment type="interaction">
    <interactant intactId="EBI-389883">
        <id>P16333</id>
    </interactant>
    <interactant intactId="EBI-1646426">
        <id>Q15109</id>
        <label>AGER</label>
    </interactant>
    <organismsDiffer>false</organismsDiffer>
    <experiments>2</experiments>
</comment>
<comment type="interaction">
    <interactant intactId="EBI-389883">
        <id>P16333</id>
    </interactant>
    <interactant intactId="EBI-1753081">
        <id>O43918</id>
        <label>AIRE</label>
    </interactant>
    <organismsDiffer>false</organismsDiffer>
    <experiments>2</experiments>
</comment>
<comment type="interaction">
    <interactant intactId="EBI-389883">
        <id>P16333</id>
    </interactant>
    <interactant intactId="EBI-311099">
        <id>O15085</id>
        <label>ARHGEF11</label>
    </interactant>
    <organismsDiffer>false</organismsDiffer>
    <experiments>3</experiments>
</comment>
<comment type="interaction">
    <interactant intactId="EBI-389883">
        <id>P16333</id>
    </interactant>
    <interactant intactId="EBI-346622">
        <id>Q9ULH1</id>
        <label>ASAP1</label>
    </interactant>
    <organismsDiffer>false</organismsDiffer>
    <experiments>6</experiments>
</comment>
<comment type="interaction">
    <interactant intactId="EBI-389883">
        <id>P16333</id>
    </interactant>
    <interactant intactId="EBI-310968">
        <id>O43150</id>
        <label>ASAP2</label>
    </interactant>
    <organismsDiffer>false</organismsDiffer>
    <experiments>2</experiments>
</comment>
<comment type="interaction">
    <interactant intactId="EBI-389883">
        <id>P16333</id>
    </interactant>
    <interactant intactId="EBI-1751918">
        <id>Q96NS5</id>
        <label>ASB16</label>
    </interactant>
    <organismsDiffer>false</organismsDiffer>
    <experiments>2</experiments>
</comment>
<comment type="interaction">
    <interactant intactId="EBI-389883">
        <id>P16333</id>
    </interactant>
    <interactant intactId="EBI-934890">
        <id>Q9UIF9</id>
        <label>BAZ2A</label>
    </interactant>
    <organismsDiffer>false</organismsDiffer>
    <experiments>2</experiments>
</comment>
<comment type="interaction">
    <interactant intactId="EBI-389883">
        <id>P16333</id>
    </interactant>
    <interactant intactId="EBI-1754943">
        <id>Q9NZM4</id>
        <label>BICRA</label>
    </interactant>
    <organismsDiffer>false</organismsDiffer>
    <experiments>3</experiments>
</comment>
<comment type="interaction">
    <interactant intactId="EBI-389883">
        <id>P16333</id>
    </interactant>
    <interactant intactId="EBI-723869">
        <id>O60885</id>
        <label>BRD4</label>
    </interactant>
    <organismsDiffer>false</organismsDiffer>
    <experiments>2</experiments>
</comment>
<comment type="interaction">
    <interactant intactId="EBI-389883">
        <id>P16333</id>
    </interactant>
    <interactant intactId="EBI-1753470">
        <id>Q9ULD4</id>
        <label>BRPF3</label>
    </interactant>
    <organismsDiffer>false</organismsDiffer>
    <experiments>3</experiments>
</comment>
<comment type="interaction">
    <interactant intactId="EBI-389883">
        <id>P16333</id>
    </interactant>
    <interactant intactId="EBI-1753221">
        <id>P13671</id>
        <label>C6</label>
    </interactant>
    <organismsDiffer>false</organismsDiffer>
    <experiments>2</experiments>
</comment>
<comment type="interaction">
    <interactant intactId="EBI-389883">
        <id>P16333</id>
    </interactant>
    <interactant intactId="EBI-1268770">
        <id>P20810</id>
        <label>CAST</label>
    </interactant>
    <organismsDiffer>false</organismsDiffer>
    <experiments>2</experiments>
</comment>
<comment type="interaction">
    <interactant intactId="EBI-389883">
        <id>P16333</id>
    </interactant>
    <interactant intactId="EBI-744027">
        <id>Q13191</id>
        <label>CBLB</label>
    </interactant>
    <organismsDiffer>false</organismsDiffer>
    <experiments>4</experiments>
</comment>
<comment type="interaction">
    <interactant intactId="EBI-389883">
        <id>P16333</id>
    </interactant>
    <interactant intactId="EBI-1165705">
        <id>P20963</id>
        <label>CD247</label>
    </interactant>
    <organismsDiffer>false</organismsDiffer>
    <experiments>2</experiments>
</comment>
<comment type="interaction">
    <interactant intactId="EBI-389883">
        <id>P16333</id>
    </interactant>
    <interactant intactId="EBI-1211297">
        <id>P07766</id>
        <label>CD3E</label>
    </interactant>
    <organismsDiffer>false</organismsDiffer>
    <experiments>6</experiments>
</comment>
<comment type="interaction">
    <interactant intactId="EBI-389883">
        <id>P16333</id>
    </interactant>
    <interactant intactId="EBI-994813">
        <id>P30260</id>
        <label>CDC27</label>
    </interactant>
    <organismsDiffer>false</organismsDiffer>
    <experiments>3</experiments>
</comment>
<comment type="interaction">
    <interactant intactId="EBI-389883">
        <id>P16333</id>
    </interactant>
    <interactant intactId="EBI-308417">
        <id>Q9NYQ7</id>
        <label>CELSR3</label>
    </interactant>
    <organismsDiffer>false</organismsDiffer>
    <experiments>2</experiments>
</comment>
<comment type="interaction">
    <interactant intactId="EBI-389883">
        <id>P16333</id>
    </interactant>
    <interactant intactId="EBI-1020839">
        <id>Q13111</id>
        <label>CHAF1A</label>
    </interactant>
    <organismsDiffer>false</organismsDiffer>
    <experiments>2</experiments>
</comment>
<comment type="interaction">
    <interactant intactId="EBI-389883">
        <id>P16333</id>
    </interactant>
    <interactant intactId="EBI-714925">
        <id>P52757</id>
        <label>CHN2</label>
    </interactant>
    <organismsDiffer>false</organismsDiffer>
    <experiments>3</experiments>
</comment>
<comment type="interaction">
    <interactant intactId="EBI-389883">
        <id>P16333</id>
    </interactant>
    <interactant intactId="EBI-310585">
        <id>Q14008</id>
        <label>CKAP5</label>
    </interactant>
    <organismsDiffer>false</organismsDiffer>
    <experiments>3</experiments>
</comment>
<comment type="interaction">
    <interactant intactId="EBI-389883">
        <id>P16333</id>
    </interactant>
    <interactant intactId="EBI-1751903">
        <id>P78357</id>
        <label>CNTNAP1</label>
    </interactant>
    <organismsDiffer>false</organismsDiffer>
    <experiments>2</experiments>
</comment>
<comment type="interaction">
    <interactant intactId="EBI-389883">
        <id>P16333</id>
    </interactant>
    <interactant intactId="EBI-1752413">
        <id>P78329</id>
        <label>CYP4F2</label>
    </interactant>
    <organismsDiffer>false</organismsDiffer>
    <experiments>2</experiments>
</comment>
<comment type="interaction">
    <interactant intactId="EBI-389883">
        <id>P16333</id>
    </interactant>
    <interactant intactId="EBI-1171238">
        <id>P98082</id>
        <label>DAB2</label>
    </interactant>
    <organismsDiffer>false</organismsDiffer>
    <experiments>2</experiments>
</comment>
<comment type="interaction">
    <interactant intactId="EBI-389883">
        <id>P16333</id>
    </interactant>
    <interactant intactId="EBI-1755945">
        <id>Q14118</id>
        <label>DAG1</label>
    </interactant>
    <organismsDiffer>false</organismsDiffer>
    <experiments>2</experiments>
</comment>
<comment type="interaction">
    <interactant intactId="EBI-389883">
        <id>P16333</id>
    </interactant>
    <interactant intactId="EBI-1753207">
        <id>O14490</id>
        <label>DLGAP1</label>
    </interactant>
    <organismsDiffer>false</organismsDiffer>
    <experiments>4</experiments>
</comment>
<comment type="interaction">
    <interactant intactId="EBI-389883">
        <id>P16333</id>
    </interactant>
    <interactant intactId="EBI-1753397">
        <id>Q9P1A6</id>
        <label>DLGAP2</label>
    </interactant>
    <organismsDiffer>false</organismsDiffer>
    <experiments>4</experiments>
</comment>
<comment type="interaction">
    <interactant intactId="EBI-389883">
        <id>P16333</id>
    </interactant>
    <interactant intactId="EBI-1752541">
        <id>O95886</id>
        <label>DLGAP3</label>
    </interactant>
    <organismsDiffer>false</organismsDiffer>
    <experiments>2</experiments>
</comment>
<comment type="interaction">
    <interactant intactId="EBI-389883">
        <id>P16333</id>
    </interactant>
    <interactant intactId="EBI-722139">
        <id>Q9Y2H0</id>
        <label>DLGAP4</label>
    </interactant>
    <organismsDiffer>false</organismsDiffer>
    <experiments>5</experiments>
</comment>
<comment type="interaction">
    <interactant intactId="EBI-389883">
        <id>P16333</id>
    </interactant>
    <interactant intactId="EBI-12000556">
        <id>Q9Y2H0-1</id>
        <label>DLGAP4</label>
    </interactant>
    <organismsDiffer>false</organismsDiffer>
    <experiments>3</experiments>
</comment>
<comment type="interaction">
    <interactant intactId="EBI-389883">
        <id>P16333</id>
    </interactant>
    <interactant intactId="EBI-1752755">
        <id>Q92988</id>
        <label>DLX4</label>
    </interactant>
    <organismsDiffer>false</organismsDiffer>
    <experiments>3</experiments>
</comment>
<comment type="interaction">
    <interactant intactId="EBI-389883">
        <id>P16333</id>
    </interactant>
    <interactant intactId="EBI-713135">
        <id>Q05193</id>
        <label>DNM1</label>
    </interactant>
    <organismsDiffer>false</organismsDiffer>
    <experiments>2</experiments>
</comment>
<comment type="interaction">
    <interactant intactId="EBI-389883">
        <id>P16333</id>
    </interactant>
    <interactant intactId="EBI-1752361">
        <id>Q8IZD9</id>
        <label>DOCK3</label>
    </interactant>
    <organismsDiffer>false</organismsDiffer>
    <experiments>3</experiments>
</comment>
<comment type="interaction">
    <interactant intactId="EBI-389883">
        <id>P16333</id>
    </interactant>
    <interactant intactId="EBI-1752795">
        <id>Q9H1R2</id>
        <label>DUSP15</label>
    </interactant>
    <organismsDiffer>false</organismsDiffer>
    <experiments>2</experiments>
</comment>
<comment type="interaction">
    <interactant intactId="EBI-389883">
        <id>P16333</id>
    </interactant>
    <interactant intactId="EBI-1054039">
        <id>Q9H8V3</id>
        <label>ECT2</label>
    </interactant>
    <organismsDiffer>false</organismsDiffer>
    <experiments>3</experiments>
</comment>
<comment type="interaction">
    <interactant intactId="EBI-389883">
        <id>P16333</id>
    </interactant>
    <interactant intactId="EBI-297353">
        <id>P00533</id>
        <label>EGFR</label>
    </interactant>
    <organismsDiffer>false</organismsDiffer>
    <experiments>5</experiments>
</comment>
<comment type="interaction">
    <interactant intactId="EBI-389883">
        <id>P16333</id>
    </interactant>
    <interactant intactId="EBI-1758534">
        <id>P41970</id>
        <label>ELK3</label>
    </interactant>
    <organismsDiffer>false</organismsDiffer>
    <experiments>3</experiments>
</comment>
<comment type="interaction">
    <interactant intactId="EBI-389883">
        <id>P16333</id>
    </interactant>
    <interactant intactId="EBI-396684">
        <id>P42566</id>
        <label>EPS15</label>
    </interactant>
    <organismsDiffer>false</organismsDiffer>
    <experiments>2</experiments>
</comment>
<comment type="interaction">
    <interactant intactId="EBI-389883">
        <id>P16333</id>
    </interactant>
    <interactant intactId="EBI-1751853">
        <id>O00254</id>
        <label>F2RL2</label>
    </interactant>
    <organismsDiffer>false</organismsDiffer>
    <experiments>2</experiments>
</comment>
<comment type="interaction">
    <interactant intactId="EBI-389883">
        <id>P16333</id>
    </interactant>
    <interactant intactId="EBI-1752811">
        <id>Q9BQ89</id>
        <label>FAM110A</label>
    </interactant>
    <organismsDiffer>false</organismsDiffer>
    <experiments>2</experiments>
</comment>
<comment type="interaction">
    <interactant intactId="EBI-389883">
        <id>P16333</id>
    </interactant>
    <interactant intactId="EBI-724784">
        <id>P31994</id>
        <label>FCGR2B</label>
    </interactant>
    <organismsDiffer>false</organismsDiffer>
    <experiments>2</experiments>
</comment>
<comment type="interaction">
    <interactant intactId="EBI-389883">
        <id>P16333</id>
    </interactant>
    <interactant intactId="EBI-1396036">
        <id>P31995</id>
        <label>FCGR2C</label>
    </interactant>
    <organismsDiffer>false</organismsDiffer>
    <experiments>2</experiments>
</comment>
<comment type="interaction">
    <interactant intactId="EBI-389883">
        <id>P16333</id>
    </interactant>
    <interactant intactId="EBI-352089">
        <id>O75369</id>
        <label>FLNB</label>
    </interactant>
    <organismsDiffer>false</organismsDiffer>
    <experiments>3</experiments>
</comment>
<comment type="interaction">
    <interactant intactId="EBI-389883">
        <id>P16333</id>
    </interactant>
    <interactant intactId="EBI-1759806">
        <id>O75593</id>
        <label>FOXH1</label>
    </interactant>
    <organismsDiffer>false</organismsDiffer>
    <experiments>2</experiments>
</comment>
<comment type="interaction">
    <interactant intactId="EBI-389883">
        <id>P16333</id>
    </interactant>
    <interactant intactId="EBI-1753267">
        <id>O15117</id>
        <label>FYB1</label>
    </interactant>
    <organismsDiffer>false</organismsDiffer>
    <experiments>3</experiments>
</comment>
<comment type="interaction">
    <interactant intactId="EBI-389883">
        <id>P16333</id>
    </interactant>
    <interactant intactId="EBI-517684">
        <id>Q13480</id>
        <label>GAB1</label>
    </interactant>
    <organismsDiffer>false</organismsDiffer>
    <experiments>3</experiments>
</comment>
<comment type="interaction">
    <interactant intactId="EBI-389883">
        <id>P16333</id>
    </interactant>
    <interactant intactId="EBI-724156">
        <id>Q9UBS5</id>
        <label>GABBR1</label>
    </interactant>
    <organismsDiffer>false</organismsDiffer>
    <experiments>3</experiments>
</comment>
<comment type="interaction">
    <interactant intactId="EBI-389883">
        <id>P16333</id>
    </interactant>
    <interactant intactId="EBI-743184">
        <id>Q99259</id>
        <label>GAD1</label>
    </interactant>
    <organismsDiffer>false</organismsDiffer>
    <experiments>2</experiments>
</comment>
<comment type="interaction">
    <interactant intactId="EBI-389883">
        <id>P16333</id>
    </interactant>
    <interactant intactId="EBI-286316">
        <id>P10912</id>
        <label>GHR</label>
    </interactant>
    <organismsDiffer>false</organismsDiffer>
    <experiments>3</experiments>
</comment>
<comment type="interaction">
    <interactant intactId="EBI-389883">
        <id>P16333</id>
    </interactant>
    <interactant intactId="EBI-1752200">
        <id>P15586</id>
        <label>GNS</label>
    </interactant>
    <organismsDiffer>false</organismsDiffer>
    <experiments>2</experiments>
</comment>
<comment type="interaction">
    <interactant intactId="EBI-389883">
        <id>P16333</id>
    </interactant>
    <interactant intactId="EBI-748043">
        <id>O43708</id>
        <label>GSTZ1</label>
    </interactant>
    <organismsDiffer>false</organismsDiffer>
    <experiments>2</experiments>
</comment>
<comment type="interaction">
    <interactant intactId="EBI-389883">
        <id>P16333</id>
    </interactant>
    <interactant intactId="EBI-358163">
        <id>P10412</id>
        <label>H1-4</label>
    </interactant>
    <organismsDiffer>false</organismsDiffer>
    <experiments>2</experiments>
</comment>
<comment type="interaction">
    <interactant intactId="EBI-389883">
        <id>P16333</id>
    </interactant>
    <interactant intactId="EBI-713419">
        <id>O43390</id>
        <label>HNRNPR</label>
    </interactant>
    <organismsDiffer>false</organismsDiffer>
    <experiments>2</experiments>
</comment>
<comment type="interaction">
    <interactant intactId="EBI-389883">
        <id>P16333</id>
    </interactant>
    <interactant intactId="EBI-1754719">
        <id>P47928</id>
        <label>ID4</label>
    </interactant>
    <organismsDiffer>false</organismsDiffer>
    <experiments>3</experiments>
</comment>
<comment type="interaction">
    <interactant intactId="EBI-389883">
        <id>P16333</id>
    </interactant>
    <interactant intactId="EBI-751335">
        <id>Q9H9L3</id>
        <label>ISG20L2</label>
    </interactant>
    <organismsDiffer>false</organismsDiffer>
    <experiments>2</experiments>
</comment>
<comment type="interaction">
    <interactant intactId="EBI-389883">
        <id>P16333</id>
    </interactant>
    <interactant intactId="EBI-518647">
        <id>O60674</id>
        <label>JAK2</label>
    </interactant>
    <organismsDiffer>false</organismsDiffer>
    <experiments>2</experiments>
</comment>
<comment type="interaction">
    <interactant intactId="EBI-389883">
        <id>P16333</id>
    </interactant>
    <interactant intactId="EBI-1005487">
        <id>P35968</id>
        <label>KDR</label>
    </interactant>
    <organismsDiffer>false</organismsDiffer>
    <experiments>3</experiments>
</comment>
<comment type="interaction">
    <interactant intactId="EBI-389883">
        <id>P16333</id>
    </interactant>
    <interactant intactId="EBI-1379503">
        <id>P10721</id>
        <label>KIT</label>
    </interactant>
    <organismsDiffer>false</organismsDiffer>
    <experiments>3</experiments>
</comment>
<comment type="interaction">
    <interactant intactId="EBI-389883">
        <id>P16333</id>
    </interactant>
    <interactant intactId="EBI-765774">
        <id>Q9UMN6</id>
        <label>KMT2B</label>
    </interactant>
    <organismsDiffer>false</organismsDiffer>
    <experiments>2</experiments>
</comment>
<comment type="interaction">
    <interactant intactId="EBI-389883">
        <id>P16333</id>
    </interactant>
    <interactant intactId="EBI-346946">
        <id>Q13094</id>
        <label>LCP2</label>
    </interactant>
    <organismsDiffer>false</organismsDiffer>
    <experiments>21</experiments>
</comment>
<comment type="interaction">
    <interactant intactId="EBI-389883">
        <id>P16333</id>
    </interactant>
    <interactant intactId="EBI-1761329">
        <id>Q9BY71</id>
        <label>LRRC3</label>
    </interactant>
    <organismsDiffer>false</organismsDiffer>
    <experiments>2</experiments>
</comment>
<comment type="interaction">
    <interactant intactId="EBI-389883">
        <id>P16333</id>
    </interactant>
    <interactant intactId="EBI-715255">
        <id>P27816</id>
        <label>MAP4</label>
    </interactant>
    <organismsDiffer>false</organismsDiffer>
    <experiments>2</experiments>
</comment>
<comment type="interaction">
    <interactant intactId="EBI-389883">
        <id>P16333</id>
    </interactant>
    <interactant intactId="EBI-881">
        <id>Q92918</id>
        <label>MAP4K1</label>
    </interactant>
    <organismsDiffer>false</organismsDiffer>
    <experiments>4</experiments>
</comment>
<comment type="interaction">
    <interactant intactId="EBI-389883">
        <id>P16333</id>
    </interactant>
    <interactant intactId="EBI-1279">
        <id>Q9Y4K4</id>
        <label>MAP4K5</label>
    </interactant>
    <organismsDiffer>false</organismsDiffer>
    <experiments>2</experiments>
</comment>
<comment type="interaction">
    <interactant intactId="EBI-389883">
        <id>P16333</id>
    </interactant>
    <interactant intactId="EBI-1753293">
        <id>Q9NQ76</id>
        <label>MEPE</label>
    </interactant>
    <organismsDiffer>false</organismsDiffer>
    <experiments>3</experiments>
</comment>
<comment type="interaction">
    <interactant intactId="EBI-389883">
        <id>P16333</id>
    </interactant>
    <interactant intactId="EBI-1039152">
        <id>P08581</id>
        <label>MET</label>
    </interactant>
    <organismsDiffer>false</organismsDiffer>
    <experiments>2</experiments>
</comment>
<comment type="interaction">
    <interactant intactId="EBI-389883">
        <id>P16333</id>
    </interactant>
    <interactant intactId="EBI-968482">
        <id>Q15746</id>
        <label>MYLK</label>
    </interactant>
    <organismsDiffer>false</organismsDiffer>
    <experiments>2</experiments>
</comment>
<comment type="interaction">
    <interactant intactId="EBI-389883">
        <id>P16333</id>
    </interactant>
    <interactant intactId="EBI-1752508">
        <id>O14513</id>
        <label>NCKAP5</label>
    </interactant>
    <organismsDiffer>false</organismsDiffer>
    <experiments>2</experiments>
</comment>
<comment type="interaction">
    <interactant intactId="EBI-389883">
        <id>P16333</id>
    </interactant>
    <interactant intactId="EBI-347721">
        <id>Q8WX92</id>
        <label>NELFB</label>
    </interactant>
    <organismsDiffer>false</organismsDiffer>
    <experiments>6</experiments>
</comment>
<comment type="interaction">
    <interactant intactId="EBI-389883">
        <id>P16333</id>
    </interactant>
    <interactant intactId="EBI-2859639">
        <id>Q5HYW2</id>
        <label>NHSL2</label>
    </interactant>
    <organismsDiffer>false</organismsDiffer>
    <experiments>3</experiments>
</comment>
<comment type="interaction">
    <interactant intactId="EBI-389883">
        <id>P16333</id>
    </interactant>
    <interactant intactId="EBI-3939668">
        <id>Q9P206</id>
        <label>NHSL3</label>
    </interactant>
    <organismsDiffer>false</organismsDiffer>
    <experiments>4</experiments>
</comment>
<comment type="interaction">
    <interactant intactId="EBI-389883">
        <id>P16333</id>
    </interactant>
    <interactant intactId="EBI-1391923">
        <id>P43699</id>
        <label>NKX2-1</label>
    </interactant>
    <organismsDiffer>false</organismsDiffer>
    <experiments>2</experiments>
</comment>
<comment type="interaction">
    <interactant intactId="EBI-389883">
        <id>P16333</id>
    </interactant>
    <interactant intactId="EBI-996920">
        <id>O60500</id>
        <label>NPHS1</label>
    </interactant>
    <organismsDiffer>false</organismsDiffer>
    <experiments>3</experiments>
</comment>
<comment type="interaction">
    <interactant intactId="EBI-389883">
        <id>P16333</id>
    </interactant>
    <interactant intactId="EBI-874629">
        <id>Q13285</id>
        <label>NR5A1</label>
    </interactant>
    <organismsDiffer>false</organismsDiffer>
    <experiments>2</experiments>
</comment>
<comment type="interaction">
    <interactant intactId="EBI-389883">
        <id>P16333</id>
    </interactant>
    <interactant intactId="EBI-1045887">
        <id>Q13177</id>
        <label>PAK2</label>
    </interactant>
    <organismsDiffer>false</organismsDiffer>
    <experiments>6</experiments>
</comment>
<comment type="interaction">
    <interactant intactId="EBI-389883">
        <id>P16333</id>
    </interactant>
    <interactant intactId="EBI-1752525">
        <id>Q13087</id>
        <label>PDIA2</label>
    </interactant>
    <organismsDiffer>false</organismsDiffer>
    <experiments>3</experiments>
</comment>
<comment type="interaction">
    <interactant intactId="EBI-389883">
        <id>P16333</id>
    </interactant>
    <interactant intactId="EBI-1754409">
        <id>O75167</id>
        <label>PHACTR2</label>
    </interactant>
    <organismsDiffer>false</organismsDiffer>
    <experiments>2</experiments>
</comment>
<comment type="interaction">
    <interactant intactId="EBI-389883">
        <id>P16333</id>
    </interactant>
    <interactant intactId="EBI-11981743">
        <id>Q6ZUJ8-3</id>
        <label>PIK3AP1</label>
    </interactant>
    <organismsDiffer>false</organismsDiffer>
    <experiments>3</experiments>
</comment>
<comment type="interaction">
    <interactant intactId="EBI-389883">
        <id>P16333</id>
    </interactant>
    <interactant intactId="EBI-641107">
        <id>O00750</id>
        <label>PIK3C2B</label>
    </interactant>
    <organismsDiffer>false</organismsDiffer>
    <experiments>3</experiments>
</comment>
<comment type="interaction">
    <interactant intactId="EBI-389883">
        <id>P16333</id>
    </interactant>
    <interactant intactId="EBI-302355">
        <id>Q9UL42</id>
        <label>PNMA2</label>
    </interactant>
    <organismsDiffer>false</organismsDiffer>
    <experiments>2</experiments>
</comment>
<comment type="interaction">
    <interactant intactId="EBI-389883">
        <id>P16333</id>
    </interactant>
    <interactant intactId="EBI-1753064">
        <id>Q9BXM0</id>
        <label>PRX</label>
    </interactant>
    <organismsDiffer>false</organismsDiffer>
    <experiments>2</experiments>
</comment>
<comment type="interaction">
    <interactant intactId="EBI-389883">
        <id>P16333</id>
    </interactant>
    <interactant intactId="EBI-710431">
        <id>P29074</id>
        <label>PTPN4</label>
    </interactant>
    <organismsDiffer>false</organismsDiffer>
    <experiments>3</experiments>
</comment>
<comment type="interaction">
    <interactant intactId="EBI-389883">
        <id>P16333</id>
    </interactant>
    <interactant intactId="EBI-1755109">
        <id>P15918</id>
        <label>RAG1</label>
    </interactant>
    <organismsDiffer>false</organismsDiffer>
    <experiments>2</experiments>
</comment>
<comment type="interaction">
    <interactant intactId="EBI-389883">
        <id>P16333</id>
    </interactant>
    <interactant intactId="EBI-976876">
        <id>Q13905</id>
        <label>RAPGEF1</label>
    </interactant>
    <organismsDiffer>false</organismsDiffer>
    <experiments>2</experiments>
</comment>
<comment type="interaction">
    <interactant intactId="EBI-389883">
        <id>P16333</id>
    </interactant>
    <interactant intactId="EBI-1026476">
        <id>P20936</id>
        <label>RASA1</label>
    </interactant>
    <organismsDiffer>false</organismsDiffer>
    <experiments>6</experiments>
</comment>
<comment type="interaction">
    <interactant intactId="EBI-389883">
        <id>P16333</id>
    </interactant>
    <interactant intactId="EBI-1756749">
        <id>Q9UQ26</id>
        <label>RIMS2</label>
    </interactant>
    <organismsDiffer>false</organismsDiffer>
    <experiments>2</experiments>
</comment>
<comment type="interaction">
    <interactant intactId="EBI-389883">
        <id>P16333</id>
    </interactant>
    <interactant intactId="EBI-1570523">
        <id>Q8TB24</id>
        <label>RIN3</label>
    </interactant>
    <organismsDiffer>false</organismsDiffer>
    <experiments>2</experiments>
</comment>
<comment type="interaction">
    <interactant intactId="EBI-389883">
        <id>P16333</id>
    </interactant>
    <interactant intactId="EBI-356849">
        <id>P26373</id>
        <label>RPL13</label>
    </interactant>
    <organismsDiffer>false</organismsDiffer>
    <experiments>2</experiments>
</comment>
<comment type="interaction">
    <interactant intactId="EBI-389883">
        <id>P16333</id>
    </interactant>
    <interactant intactId="EBI-366493">
        <id>P78345</id>
        <label>RPP38</label>
    </interactant>
    <organismsDiffer>false</organismsDiffer>
    <experiments>2</experiments>
</comment>
<comment type="interaction">
    <interactant intactId="EBI-389883">
        <id>P16333</id>
    </interactant>
    <interactant intactId="EBI-968703">
        <id>P10301</id>
        <label>RRAS</label>
    </interactant>
    <organismsDiffer>false</organismsDiffer>
    <experiments>3</experiments>
</comment>
<comment type="interaction">
    <interactant intactId="EBI-389883">
        <id>P16333</id>
    </interactant>
    <interactant intactId="EBI-1752088">
        <id>Q96GP6</id>
        <label>SCARF2</label>
    </interactant>
    <organismsDiffer>false</organismsDiffer>
    <experiments>2</experiments>
</comment>
<comment type="interaction">
    <interactant intactId="EBI-389883">
        <id>P16333</id>
    </interactant>
    <interactant intactId="EBI-1751965">
        <id>Q9NZV5</id>
        <label>SELENON</label>
    </interactant>
    <organismsDiffer>false</organismsDiffer>
    <experiments>2</experiments>
</comment>
<comment type="interaction">
    <interactant intactId="EBI-389883">
        <id>P16333</id>
    </interactant>
    <interactant intactId="EBI-1753538">
        <id>O75326</id>
        <label>SEMA7A</label>
    </interactant>
    <organismsDiffer>false</organismsDiffer>
    <experiments>2</experiments>
</comment>
<comment type="interaction">
    <interactant intactId="EBI-389883">
        <id>P16333</id>
    </interactant>
    <interactant intactId="EBI-1570571">
        <id>Q9UPX8</id>
        <label>SHANK2</label>
    </interactant>
    <organismsDiffer>false</organismsDiffer>
    <experiments>6</experiments>
</comment>
<comment type="interaction">
    <interactant intactId="EBI-389883">
        <id>P16333</id>
    </interactant>
    <interactant intactId="EBI-1752330">
        <id>Q9BYB0</id>
        <label>SHANK3</label>
    </interactant>
    <organismsDiffer>false</organismsDiffer>
    <experiments>4</experiments>
</comment>
<comment type="interaction">
    <interactant intactId="EBI-389883">
        <id>P16333</id>
    </interactant>
    <interactant intactId="EBI-1644065">
        <id>Q13796</id>
        <label>SHROOM2</label>
    </interactant>
    <organismsDiffer>false</organismsDiffer>
    <experiments>2</experiments>
</comment>
<comment type="interaction">
    <interactant intactId="EBI-389883">
        <id>P16333</id>
    </interactant>
    <interactant intactId="EBI-1759386">
        <id>Q9UHI7</id>
        <label>SLC23A1</label>
    </interactant>
    <organismsDiffer>false</organismsDiffer>
    <experiments>2</experiments>
</comment>
<comment type="interaction">
    <interactant intactId="EBI-389883">
        <id>P16333</id>
    </interactant>
    <interactant intactId="EBI-1753504">
        <id>O60721</id>
        <label>SLC24A1</label>
    </interactant>
    <organismsDiffer>false</organismsDiffer>
    <experiments>3</experiments>
</comment>
<comment type="interaction">
    <interactant intactId="EBI-389883">
        <id>P16333</id>
    </interactant>
    <interactant intactId="EBI-1752602">
        <id>Q9UMY4</id>
        <label>SNX12</label>
    </interactant>
    <organismsDiffer>false</organismsDiffer>
    <experiments>3</experiments>
</comment>
<comment type="interaction">
    <interactant intactId="EBI-389883">
        <id>P16333</id>
    </interactant>
    <interactant intactId="EBI-1752620">
        <id>Q15036</id>
        <label>SNX17</label>
    </interactant>
    <organismsDiffer>false</organismsDiffer>
    <experiments>3</experiments>
</comment>
<comment type="interaction">
    <interactant intactId="EBI-389883">
        <id>P16333</id>
    </interactant>
    <interactant intactId="EBI-1752557">
        <id>Q9Y5X2</id>
        <label>SNX8</label>
    </interactant>
    <organismsDiffer>false</organismsDiffer>
    <experiments>2</experiments>
</comment>
<comment type="interaction">
    <interactant intactId="EBI-389883">
        <id>P16333</id>
    </interactant>
    <interactant intactId="EBI-297487">
        <id>Q07889</id>
        <label>SOS1</label>
    </interactant>
    <organismsDiffer>false</organismsDiffer>
    <experiments>6</experiments>
</comment>
<comment type="interaction">
    <interactant intactId="EBI-389883">
        <id>P16333</id>
    </interactant>
    <interactant intactId="EBI-298181">
        <id>Q07890</id>
        <label>SOS2</label>
    </interactant>
    <organismsDiffer>false</organismsDiffer>
    <experiments>4</experiments>
</comment>
<comment type="interaction">
    <interactant intactId="EBI-389883">
        <id>P16333</id>
    </interactant>
    <interactant intactId="EBI-298336">
        <id>P08047</id>
        <label>SP1</label>
    </interactant>
    <organismsDiffer>false</organismsDiffer>
    <experiments>2</experiments>
</comment>
<comment type="interaction">
    <interactant intactId="EBI-389883">
        <id>P16333</id>
    </interactant>
    <interactant intactId="EBI-765739">
        <id>Q96T58</id>
        <label>SPEN</label>
    </interactant>
    <organismsDiffer>false</organismsDiffer>
    <experiments>3</experiments>
</comment>
<comment type="interaction">
    <interactant intactId="EBI-389883">
        <id>P16333</id>
    </interactant>
    <interactant intactId="EBI-458376">
        <id>Q15208</id>
        <label>STK38</label>
    </interactant>
    <organismsDiffer>false</organismsDiffer>
    <experiments>3</experiments>
</comment>
<comment type="interaction">
    <interactant intactId="EBI-389883">
        <id>P16333</id>
    </interactant>
    <interactant intactId="EBI-723127">
        <id>Q9H5I1</id>
        <label>SUV39H2</label>
    </interactant>
    <organismsDiffer>false</organismsDiffer>
    <experiments>2</experiments>
</comment>
<comment type="interaction">
    <interactant intactId="EBI-389883">
        <id>P16333</id>
    </interactant>
    <interactant intactId="EBI-310513">
        <id>O15056</id>
        <label>SYNJ2</label>
    </interactant>
    <organismsDiffer>false</organismsDiffer>
    <experiments>3</experiments>
</comment>
<comment type="interaction">
    <interactant intactId="EBI-389883">
        <id>P16333</id>
    </interactant>
    <interactant intactId="EBI-1752146">
        <id>O43493</id>
        <label>TGOLN2</label>
    </interactant>
    <organismsDiffer>false</organismsDiffer>
    <experiments>3</experiments>
</comment>
<comment type="interaction">
    <interactant intactId="EBI-389883">
        <id>P16333</id>
    </interactant>
    <interactant intactId="EBI-455283">
        <id>P42167</id>
        <label>TMPO</label>
    </interactant>
    <organismsDiffer>false</organismsDiffer>
    <experiments>2</experiments>
</comment>
<comment type="interaction">
    <interactant intactId="EBI-389883">
        <id>P16333</id>
    </interactant>
    <interactant intactId="EBI-1051794">
        <id>Q9UKE5</id>
        <label>TNIK</label>
    </interactant>
    <organismsDiffer>false</organismsDiffer>
    <experiments>2</experiments>
</comment>
<comment type="interaction">
    <interactant intactId="EBI-389883">
        <id>P16333</id>
    </interactant>
    <interactant intactId="EBI-1761369">
        <id>Q15661</id>
        <label>TPSAB1</label>
    </interactant>
    <organismsDiffer>false</organismsDiffer>
    <experiments>2</experiments>
</comment>
<comment type="interaction">
    <interactant intactId="EBI-389883">
        <id>P16333</id>
    </interactant>
    <interactant intactId="EBI-1037322">
        <id>Q9ULW0</id>
        <label>TPX2</label>
    </interactant>
    <organismsDiffer>false</organismsDiffer>
    <experiments>4</experiments>
</comment>
<comment type="interaction">
    <interactant intactId="EBI-389883">
        <id>P16333</id>
    </interactant>
    <interactant intactId="EBI-1756205">
        <id>Q9BWF2</id>
        <label>TRAIP</label>
    </interactant>
    <organismsDiffer>false</organismsDiffer>
    <experiments>3</experiments>
</comment>
<comment type="interaction">
    <interactant intactId="EBI-389883">
        <id>P16333</id>
    </interactant>
    <interactant intactId="EBI-739510">
        <id>Q9HCM9</id>
        <label>TRIM39</label>
    </interactant>
    <organismsDiffer>false</organismsDiffer>
    <experiments>2</experiments>
</comment>
<comment type="interaction">
    <interactant intactId="EBI-389883">
        <id>P16333</id>
    </interactant>
    <interactant intactId="EBI-1756778">
        <id>O00294</id>
        <label>TULP1</label>
    </interactant>
    <organismsDiffer>false</organismsDiffer>
    <experiments>2</experiments>
</comment>
<comment type="interaction">
    <interactant intactId="EBI-389883">
        <id>P16333</id>
    </interactant>
    <interactant intactId="EBI-1752583">
        <id>Q96RL7</id>
        <label>VPS13A</label>
    </interactant>
    <organismsDiffer>false</organismsDiffer>
    <experiments>3</experiments>
</comment>
<comment type="interaction">
    <interactant intactId="EBI-389883">
        <id>P16333</id>
    </interactant>
    <interactant intactId="EBI-957615">
        <id>O00401</id>
        <label>WASL</label>
    </interactant>
    <organismsDiffer>false</organismsDiffer>
    <experiments>4</experiments>
</comment>
<comment type="interaction">
    <interactant intactId="EBI-389883">
        <id>P16333</id>
    </interactant>
    <interactant intactId="EBI-346356">
        <id>O43516</id>
        <label>WIPF1</label>
    </interactant>
    <organismsDiffer>false</organismsDiffer>
    <experiments>3</experiments>
</comment>
<comment type="interaction">
    <interactant intactId="EBI-15578122">
        <id>P16333-1</id>
    </interactant>
    <interactant intactId="EBI-495538">
        <id>P48023</id>
        <label>FASLG</label>
    </interactant>
    <organismsDiffer>false</organismsDiffer>
    <experiments>4</experiments>
</comment>
<comment type="interaction">
    <interactant intactId="EBI-15578122">
        <id>P16333-1</id>
    </interactant>
    <interactant intactId="EBI-1237132">
        <id>O60942</id>
        <label>RNGTT</label>
    </interactant>
    <organismsDiffer>false</organismsDiffer>
    <experiments>2</experiments>
</comment>
<comment type="interaction">
    <interactant intactId="EBI-15578122">
        <id>P16333-1</id>
    </interactant>
    <interactant intactId="EBI-957615">
        <id>O00401</id>
        <label>WASL</label>
    </interactant>
    <organismsDiffer>false</organismsDiffer>
    <experiments>2</experiments>
</comment>
<comment type="interaction">
    <interactant intactId="EBI-15578122">
        <id>P16333-1</id>
    </interactant>
    <interactant intactId="EBI-16118241">
        <id>O55236</id>
        <label>Rngtt</label>
    </interactant>
    <organismsDiffer>true</organismsDiffer>
    <experiments>3</experiments>
</comment>
<comment type="interaction">
    <interactant intactId="EBI-15578122">
        <id>P16333-1</id>
    </interactant>
    <interactant intactId="EBI-7780354">
        <id>O54967</id>
        <label>Tnk2</label>
    </interactant>
    <organismsDiffer>true</organismsDiffer>
    <experiments>2</experiments>
</comment>
<comment type="subcellular location">
    <subcellularLocation>
        <location>Cytoplasm</location>
    </subcellularLocation>
    <subcellularLocation>
        <location>Endoplasmic reticulum</location>
    </subcellularLocation>
    <subcellularLocation>
        <location>Nucleus</location>
    </subcellularLocation>
    <text>Mostly cytoplasmic, but shuttles between the cytoplasm and the nucleus. Import into the nucleus requires the interaction with SOCS7. Predominantly nuclear following genotoxic stresses, such as UV irradiation, hydroxyurea or mitomycin C treatments.</text>
</comment>
<comment type="alternative products">
    <event type="alternative splicing"/>
    <isoform>
        <id>P16333-1</id>
        <name>1</name>
        <sequence type="displayed"/>
    </isoform>
    <isoform>
        <id>P16333-2</id>
        <name>2</name>
        <sequence type="described" ref="VSP_043122"/>
    </isoform>
</comment>
<comment type="domain">
    <text>Only the first and third SH3 domains seem to be involved in RASA1-binding; the second SH3 domain and the SH2 domains do not seem to be involved.</text>
</comment>
<comment type="PTM">
    <text evidence="3 6 7 15 20">Phosphorylated on Ser and Tyr residues. Phosphorylated in response to activation of EGFR and FcERI. Phosphorylated by activated PDGFRB.</text>
</comment>
<dbReference type="EMBL" id="X17576">
    <property type="protein sequence ID" value="CAA35599.1"/>
    <property type="molecule type" value="mRNA"/>
</dbReference>
<dbReference type="EMBL" id="AK301460">
    <property type="protein sequence ID" value="BAH13487.1"/>
    <property type="molecule type" value="mRNA"/>
</dbReference>
<dbReference type="EMBL" id="AC011597">
    <property type="status" value="NOT_ANNOTATED_CDS"/>
    <property type="molecule type" value="Genomic_DNA"/>
</dbReference>
<dbReference type="EMBL" id="CH471052">
    <property type="protein sequence ID" value="EAW79105.1"/>
    <property type="molecule type" value="Genomic_DNA"/>
</dbReference>
<dbReference type="EMBL" id="CH471052">
    <property type="protein sequence ID" value="EAW79108.1"/>
    <property type="molecule type" value="Genomic_DNA"/>
</dbReference>
<dbReference type="EMBL" id="CH471052">
    <property type="protein sequence ID" value="EAW79109.1"/>
    <property type="molecule type" value="Genomic_DNA"/>
</dbReference>
<dbReference type="EMBL" id="BC006403">
    <property type="protein sequence ID" value="AAH06403.1"/>
    <property type="molecule type" value="mRNA"/>
</dbReference>
<dbReference type="CCDS" id="CCDS3092.1">
    <molecule id="P16333-1"/>
</dbReference>
<dbReference type="CCDS" id="CCDS54644.1">
    <molecule id="P16333-2"/>
</dbReference>
<dbReference type="PIR" id="S08636">
    <property type="entry name" value="S08636"/>
</dbReference>
<dbReference type="RefSeq" id="NP_001177725.1">
    <molecule id="P16333-2"/>
    <property type="nucleotide sequence ID" value="NM_001190796.3"/>
</dbReference>
<dbReference type="RefSeq" id="NP_001278928.1">
    <molecule id="P16333-1"/>
    <property type="nucleotide sequence ID" value="NM_001291999.2"/>
</dbReference>
<dbReference type="RefSeq" id="NP_006144.1">
    <molecule id="P16333-1"/>
    <property type="nucleotide sequence ID" value="NM_006153.6"/>
</dbReference>
<dbReference type="RefSeq" id="XP_024309306.1">
    <molecule id="P16333-1"/>
    <property type="nucleotide sequence ID" value="XM_024453538.2"/>
</dbReference>
<dbReference type="RefSeq" id="XP_047304145.1">
    <molecule id="P16333-1"/>
    <property type="nucleotide sequence ID" value="XM_047448189.1"/>
</dbReference>
<dbReference type="RefSeq" id="XP_047304146.1">
    <molecule id="P16333-1"/>
    <property type="nucleotide sequence ID" value="XM_047448190.1"/>
</dbReference>
<dbReference type="RefSeq" id="XP_047304147.1">
    <molecule id="P16333-1"/>
    <property type="nucleotide sequence ID" value="XM_047448191.1"/>
</dbReference>
<dbReference type="RefSeq" id="XP_054202606.1">
    <molecule id="P16333-1"/>
    <property type="nucleotide sequence ID" value="XM_054346631.1"/>
</dbReference>
<dbReference type="RefSeq" id="XP_054202607.1">
    <molecule id="P16333-1"/>
    <property type="nucleotide sequence ID" value="XM_054346632.1"/>
</dbReference>
<dbReference type="RefSeq" id="XP_054202608.1">
    <molecule id="P16333-1"/>
    <property type="nucleotide sequence ID" value="XM_054346633.1"/>
</dbReference>
<dbReference type="RefSeq" id="XP_054202609.1">
    <molecule id="P16333-1"/>
    <property type="nucleotide sequence ID" value="XM_054346634.1"/>
</dbReference>
<dbReference type="PDB" id="2CI8">
    <property type="method" value="X-ray"/>
    <property type="resolution" value="1.80 A"/>
    <property type="chains" value="A=281-377"/>
</dbReference>
<dbReference type="PDB" id="2CI9">
    <property type="method" value="X-ray"/>
    <property type="resolution" value="1.50 A"/>
    <property type="chains" value="A/B=281-377"/>
</dbReference>
<dbReference type="PDB" id="2CUB">
    <property type="method" value="NMR"/>
    <property type="chains" value="A=99-173"/>
</dbReference>
<dbReference type="PDB" id="2JS0">
    <property type="method" value="NMR"/>
    <property type="chains" value="A=107-165"/>
</dbReference>
<dbReference type="PDB" id="2JS2">
    <property type="method" value="NMR"/>
    <property type="chains" value="A=1-61"/>
</dbReference>
<dbReference type="PDB" id="2JW4">
    <property type="method" value="NMR"/>
    <property type="chains" value="A=1-63"/>
</dbReference>
<dbReference type="PDB" id="5QU1">
    <property type="method" value="X-ray"/>
    <property type="resolution" value="1.08 A"/>
    <property type="chains" value="A/B=4-59"/>
</dbReference>
<dbReference type="PDB" id="5QU2">
    <property type="method" value="X-ray"/>
    <property type="resolution" value="1.04 A"/>
    <property type="chains" value="A/B=1-59"/>
</dbReference>
<dbReference type="PDB" id="5QU3">
    <property type="method" value="X-ray"/>
    <property type="resolution" value="1.02 A"/>
    <property type="chains" value="A/B=4-59"/>
</dbReference>
<dbReference type="PDB" id="5QU4">
    <property type="method" value="X-ray"/>
    <property type="resolution" value="1.05 A"/>
    <property type="chains" value="A/B/C/D=1-61"/>
</dbReference>
<dbReference type="PDB" id="5QU5">
    <property type="method" value="X-ray"/>
    <property type="resolution" value="1.11 A"/>
    <property type="chains" value="A/B=1-61"/>
</dbReference>
<dbReference type="PDB" id="5QU6">
    <property type="method" value="X-ray"/>
    <property type="resolution" value="1.82 A"/>
    <property type="chains" value="1/2/A/B/C/D/E/F/G/H/I/J/K/L/M/N/O/P/Q/R/S/T/U/V/W/X/Y/Z=1-61"/>
</dbReference>
<dbReference type="PDB" id="5QU7">
    <property type="method" value="X-ray"/>
    <property type="resolution" value="1.27 A"/>
    <property type="chains" value="A/B=4-59"/>
</dbReference>
<dbReference type="PDB" id="5QU8">
    <property type="method" value="X-ray"/>
    <property type="resolution" value="0.93 A"/>
    <property type="chains" value="A=1-61"/>
</dbReference>
<dbReference type="PDB" id="5QUA">
    <property type="method" value="X-ray"/>
    <property type="resolution" value="1.51 A"/>
    <property type="chains" value="A/B=1-61"/>
</dbReference>
<dbReference type="PDBsum" id="2CI8"/>
<dbReference type="PDBsum" id="2CI9"/>
<dbReference type="PDBsum" id="2CUB"/>
<dbReference type="PDBsum" id="2JS0"/>
<dbReference type="PDBsum" id="2JS2"/>
<dbReference type="PDBsum" id="2JW4"/>
<dbReference type="PDBsum" id="5QU1"/>
<dbReference type="PDBsum" id="5QU2"/>
<dbReference type="PDBsum" id="5QU3"/>
<dbReference type="PDBsum" id="5QU4"/>
<dbReference type="PDBsum" id="5QU5"/>
<dbReference type="PDBsum" id="5QU6"/>
<dbReference type="PDBsum" id="5QU7"/>
<dbReference type="PDBsum" id="5QU8"/>
<dbReference type="PDBsum" id="5QUA"/>
<dbReference type="BMRB" id="P16333"/>
<dbReference type="SMR" id="P16333"/>
<dbReference type="BioGRID" id="110770">
    <property type="interactions" value="216"/>
</dbReference>
<dbReference type="CORUM" id="P16333"/>
<dbReference type="DIP" id="DIP-639N"/>
<dbReference type="ELM" id="P16333"/>
<dbReference type="FunCoup" id="P16333">
    <property type="interactions" value="3592"/>
</dbReference>
<dbReference type="IntAct" id="P16333">
    <property type="interactions" value="318"/>
</dbReference>
<dbReference type="MINT" id="P16333"/>
<dbReference type="STRING" id="9606.ENSP00000417273"/>
<dbReference type="BindingDB" id="P16333"/>
<dbReference type="ChEMBL" id="CHEMBL4846"/>
<dbReference type="MoonDB" id="P16333">
    <property type="type" value="Predicted"/>
</dbReference>
<dbReference type="iPTMnet" id="P16333"/>
<dbReference type="MetOSite" id="P16333"/>
<dbReference type="PhosphoSitePlus" id="P16333"/>
<dbReference type="BioMuta" id="NCK1"/>
<dbReference type="DMDM" id="127962"/>
<dbReference type="jPOST" id="P16333"/>
<dbReference type="MassIVE" id="P16333"/>
<dbReference type="PaxDb" id="9606-ENSP00000417273"/>
<dbReference type="PeptideAtlas" id="P16333"/>
<dbReference type="ProteomicsDB" id="53345">
    <molecule id="P16333-1"/>
</dbReference>
<dbReference type="ProteomicsDB" id="53346">
    <molecule id="P16333-2"/>
</dbReference>
<dbReference type="Pumba" id="P16333"/>
<dbReference type="Antibodypedia" id="3567">
    <property type="antibodies" value="549 antibodies from 39 providers"/>
</dbReference>
<dbReference type="DNASU" id="4690"/>
<dbReference type="Ensembl" id="ENST00000288986.6">
    <molecule id="P16333-1"/>
    <property type="protein sequence ID" value="ENSP00000288986.2"/>
    <property type="gene ID" value="ENSG00000158092.7"/>
</dbReference>
<dbReference type="Ensembl" id="ENST00000469404.1">
    <molecule id="P16333-2"/>
    <property type="protein sequence ID" value="ENSP00000419631.1"/>
    <property type="gene ID" value="ENSG00000158092.7"/>
</dbReference>
<dbReference type="Ensembl" id="ENST00000481752.6">
    <molecule id="P16333-1"/>
    <property type="protein sequence ID" value="ENSP00000417273.1"/>
    <property type="gene ID" value="ENSG00000158092.7"/>
</dbReference>
<dbReference type="GeneID" id="4690"/>
<dbReference type="KEGG" id="hsa:4690"/>
<dbReference type="MANE-Select" id="ENST00000481752.6">
    <property type="protein sequence ID" value="ENSP00000417273.1"/>
    <property type="RefSeq nucleotide sequence ID" value="NM_001291999.2"/>
    <property type="RefSeq protein sequence ID" value="NP_001278928.1"/>
</dbReference>
<dbReference type="UCSC" id="uc003erh.3">
    <molecule id="P16333-1"/>
    <property type="organism name" value="human"/>
</dbReference>
<dbReference type="AGR" id="HGNC:7664"/>
<dbReference type="CTD" id="4690"/>
<dbReference type="DisGeNET" id="4690"/>
<dbReference type="GeneCards" id="NCK1"/>
<dbReference type="HGNC" id="HGNC:7664">
    <property type="gene designation" value="NCK1"/>
</dbReference>
<dbReference type="HPA" id="ENSG00000158092">
    <property type="expression patterns" value="Low tissue specificity"/>
</dbReference>
<dbReference type="MIM" id="600508">
    <property type="type" value="gene"/>
</dbReference>
<dbReference type="neXtProt" id="NX_P16333"/>
<dbReference type="OpenTargets" id="ENSG00000158092"/>
<dbReference type="PharmGKB" id="PA31466"/>
<dbReference type="VEuPathDB" id="HostDB:ENSG00000158092"/>
<dbReference type="eggNOG" id="KOG4226">
    <property type="taxonomic scope" value="Eukaryota"/>
</dbReference>
<dbReference type="GeneTree" id="ENSGT00940000156601"/>
<dbReference type="HOGENOM" id="CLU_025160_0_1_1"/>
<dbReference type="InParanoid" id="P16333"/>
<dbReference type="OMA" id="ADTDMST"/>
<dbReference type="OrthoDB" id="26539at2759"/>
<dbReference type="PAN-GO" id="P16333">
    <property type="GO annotations" value="9 GO annotations based on evolutionary models"/>
</dbReference>
<dbReference type="PhylomeDB" id="P16333"/>
<dbReference type="TreeFam" id="TF351631"/>
<dbReference type="PathwayCommons" id="P16333"/>
<dbReference type="Reactome" id="R-HSA-186763">
    <property type="pathway name" value="Downstream signal transduction"/>
</dbReference>
<dbReference type="Reactome" id="R-HSA-202433">
    <property type="pathway name" value="Generation of second messenger molecules"/>
</dbReference>
<dbReference type="Reactome" id="R-HSA-2029482">
    <property type="pathway name" value="Regulation of actin dynamics for phagocytic cup formation"/>
</dbReference>
<dbReference type="Reactome" id="R-HSA-373753">
    <property type="pathway name" value="Nephrin family interactions"/>
</dbReference>
<dbReference type="Reactome" id="R-HSA-418885">
    <property type="pathway name" value="DCC mediated attractive signaling"/>
</dbReference>
<dbReference type="Reactome" id="R-HSA-428540">
    <property type="pathway name" value="Activation of RAC1"/>
</dbReference>
<dbReference type="Reactome" id="R-HSA-4420097">
    <property type="pathway name" value="VEGFA-VEGFR2 Pathway"/>
</dbReference>
<dbReference type="Reactome" id="R-HSA-5663213">
    <property type="pathway name" value="RHO GTPases Activate WASPs and WAVEs"/>
</dbReference>
<dbReference type="Reactome" id="R-HSA-9013420">
    <property type="pathway name" value="RHOU GTPase cycle"/>
</dbReference>
<dbReference type="Reactome" id="R-HSA-9013424">
    <property type="pathway name" value="RHOV GTPase cycle"/>
</dbReference>
<dbReference type="Reactome" id="R-HSA-9664422">
    <property type="pathway name" value="FCGR3A-mediated phagocytosis"/>
</dbReference>
<dbReference type="Reactome" id="R-HSA-9679191">
    <property type="pathway name" value="Potential therapeutics for SARS"/>
</dbReference>
<dbReference type="Reactome" id="R-HSA-9833482">
    <property type="pathway name" value="PKR-mediated signaling"/>
</dbReference>
<dbReference type="Reactome" id="R-HSA-983695">
    <property type="pathway name" value="Antigen activates B Cell Receptor (BCR) leading to generation of second messengers"/>
</dbReference>
<dbReference type="SignaLink" id="P16333"/>
<dbReference type="SIGNOR" id="P16333"/>
<dbReference type="BioGRID-ORCS" id="4690">
    <property type="hits" value="40 hits in 1161 CRISPR screens"/>
</dbReference>
<dbReference type="CD-CODE" id="041D4500">
    <property type="entry name" value="Synthetic Condensate 000036"/>
</dbReference>
<dbReference type="CD-CODE" id="1070A586">
    <property type="entry name" value="Synthetic Condensate 000045"/>
</dbReference>
<dbReference type="CD-CODE" id="170524B4">
    <property type="entry name" value="Synthetic Condensate 000168"/>
</dbReference>
<dbReference type="CD-CODE" id="1A926453">
    <property type="entry name" value="Synthetic Condensate 000307"/>
</dbReference>
<dbReference type="CD-CODE" id="1CD3856C">
    <property type="entry name" value="Synthetic Condensate 000003"/>
</dbReference>
<dbReference type="CD-CODE" id="28618213">
    <property type="entry name" value="Synthetic Condensate 000040"/>
</dbReference>
<dbReference type="CD-CODE" id="589474B0">
    <property type="entry name" value="Synthetic Condensate 000287"/>
</dbReference>
<dbReference type="CD-CODE" id="7ADEF05E">
    <property type="entry name" value="Synthetic Condensate 000039"/>
</dbReference>
<dbReference type="CD-CODE" id="84374B0C">
    <property type="entry name" value="Synthetic Condensate 000158"/>
</dbReference>
<dbReference type="CD-CODE" id="A13F0EB5">
    <property type="entry name" value="Synthetic Condensate 000320"/>
</dbReference>
<dbReference type="CD-CODE" id="B5B9A610">
    <property type="entry name" value="PML body"/>
</dbReference>
<dbReference type="CD-CODE" id="B6F3E647">
    <property type="entry name" value="Synthetic Condensate 000176"/>
</dbReference>
<dbReference type="CD-CODE" id="F345034F">
    <property type="entry name" value="Signaling cluster"/>
</dbReference>
<dbReference type="CD-CODE" id="FB4E32DD">
    <property type="entry name" value="Presynaptic clusters and postsynaptic densities"/>
</dbReference>
<dbReference type="ChiTaRS" id="NCK1">
    <property type="organism name" value="human"/>
</dbReference>
<dbReference type="EvolutionaryTrace" id="P16333"/>
<dbReference type="GeneWiki" id="NCK1"/>
<dbReference type="GenomeRNAi" id="4690"/>
<dbReference type="Pharos" id="P16333">
    <property type="development level" value="Tbio"/>
</dbReference>
<dbReference type="PRO" id="PR:P16333"/>
<dbReference type="Proteomes" id="UP000005640">
    <property type="component" value="Chromosome 3"/>
</dbReference>
<dbReference type="RNAct" id="P16333">
    <property type="molecule type" value="protein"/>
</dbReference>
<dbReference type="Bgee" id="ENSG00000158092">
    <property type="expression patterns" value="Expressed in penis and 208 other cell types or tissues"/>
</dbReference>
<dbReference type="ExpressionAtlas" id="P16333">
    <property type="expression patterns" value="baseline and differential"/>
</dbReference>
<dbReference type="GO" id="GO:0005911">
    <property type="term" value="C:cell-cell junction"/>
    <property type="evidence" value="ECO:0007669"/>
    <property type="project" value="Ensembl"/>
</dbReference>
<dbReference type="GO" id="GO:0005737">
    <property type="term" value="C:cytoplasm"/>
    <property type="evidence" value="ECO:0000314"/>
    <property type="project" value="BHF-UCL"/>
</dbReference>
<dbReference type="GO" id="GO:0005829">
    <property type="term" value="C:cytosol"/>
    <property type="evidence" value="ECO:0000314"/>
    <property type="project" value="HPA"/>
</dbReference>
<dbReference type="GO" id="GO:0005783">
    <property type="term" value="C:endoplasmic reticulum"/>
    <property type="evidence" value="ECO:0000314"/>
    <property type="project" value="ParkinsonsUK-UCL"/>
</dbReference>
<dbReference type="GO" id="GO:0005634">
    <property type="term" value="C:nucleus"/>
    <property type="evidence" value="ECO:0007669"/>
    <property type="project" value="UniProtKB-SubCell"/>
</dbReference>
<dbReference type="GO" id="GO:0005886">
    <property type="term" value="C:plasma membrane"/>
    <property type="evidence" value="ECO:0000314"/>
    <property type="project" value="HPA"/>
</dbReference>
<dbReference type="GO" id="GO:0000164">
    <property type="term" value="C:protein phosphatase type 1 complex"/>
    <property type="evidence" value="ECO:0000314"/>
    <property type="project" value="ParkinsonsUK-UCL"/>
</dbReference>
<dbReference type="GO" id="GO:0005840">
    <property type="term" value="C:ribosome"/>
    <property type="evidence" value="ECO:0000314"/>
    <property type="project" value="ParkinsonsUK-UCL"/>
</dbReference>
<dbReference type="GO" id="GO:0012506">
    <property type="term" value="C:vesicle membrane"/>
    <property type="evidence" value="ECO:0007669"/>
    <property type="project" value="Ensembl"/>
</dbReference>
<dbReference type="GO" id="GO:0045296">
    <property type="term" value="F:cadherin binding"/>
    <property type="evidence" value="ECO:0007005"/>
    <property type="project" value="BHF-UCL"/>
</dbReference>
<dbReference type="GO" id="GO:0008093">
    <property type="term" value="F:cytoskeletal anchor activity"/>
    <property type="evidence" value="ECO:0000303"/>
    <property type="project" value="UniProtKB"/>
</dbReference>
<dbReference type="GO" id="GO:0046875">
    <property type="term" value="F:ephrin receptor binding"/>
    <property type="evidence" value="ECO:0000318"/>
    <property type="project" value="GO_Central"/>
</dbReference>
<dbReference type="GO" id="GO:0071074">
    <property type="term" value="F:eukaryotic initiation factor eIF2 binding"/>
    <property type="evidence" value="ECO:0000353"/>
    <property type="project" value="ParkinsonsUK-UCL"/>
</dbReference>
<dbReference type="GO" id="GO:0140693">
    <property type="term" value="F:molecular condensate scaffold activity"/>
    <property type="evidence" value="ECO:0000314"/>
    <property type="project" value="DisProt"/>
</dbReference>
<dbReference type="GO" id="GO:0019904">
    <property type="term" value="F:protein domain specific binding"/>
    <property type="evidence" value="ECO:0007669"/>
    <property type="project" value="Ensembl"/>
</dbReference>
<dbReference type="GO" id="GO:0004860">
    <property type="term" value="F:protein kinase inhibitor activity"/>
    <property type="evidence" value="ECO:0000314"/>
    <property type="project" value="UniProtKB"/>
</dbReference>
<dbReference type="GO" id="GO:0140311">
    <property type="term" value="F:protein sequestering activity"/>
    <property type="evidence" value="ECO:0000314"/>
    <property type="project" value="UniProt"/>
</dbReference>
<dbReference type="GO" id="GO:0030674">
    <property type="term" value="F:protein-macromolecule adaptor activity"/>
    <property type="evidence" value="ECO:0000314"/>
    <property type="project" value="FlyBase"/>
</dbReference>
<dbReference type="GO" id="GO:0030971">
    <property type="term" value="F:receptor tyrosine kinase binding"/>
    <property type="evidence" value="ECO:0000353"/>
    <property type="project" value="UniProtKB"/>
</dbReference>
<dbReference type="GO" id="GO:0035591">
    <property type="term" value="F:signaling adaptor activity"/>
    <property type="evidence" value="ECO:0000314"/>
    <property type="project" value="ParkinsonsUK-UCL"/>
</dbReference>
<dbReference type="GO" id="GO:0005102">
    <property type="term" value="F:signaling receptor binding"/>
    <property type="evidence" value="ECO:0000353"/>
    <property type="project" value="UniProtKB"/>
</dbReference>
<dbReference type="GO" id="GO:0030159">
    <property type="term" value="F:signaling receptor complex adaptor activity"/>
    <property type="evidence" value="ECO:0000303"/>
    <property type="project" value="UniProtKB"/>
</dbReference>
<dbReference type="GO" id="GO:0007015">
    <property type="term" value="P:actin filament organization"/>
    <property type="evidence" value="ECO:0007669"/>
    <property type="project" value="Ensembl"/>
</dbReference>
<dbReference type="GO" id="GO:0140374">
    <property type="term" value="P:antiviral innate immune response"/>
    <property type="evidence" value="ECO:0000314"/>
    <property type="project" value="UniProtKB"/>
</dbReference>
<dbReference type="GO" id="GO:0016477">
    <property type="term" value="P:cell migration"/>
    <property type="evidence" value="ECO:0000318"/>
    <property type="project" value="GO_Central"/>
</dbReference>
<dbReference type="GO" id="GO:0048013">
    <property type="term" value="P:ephrin receptor signaling pathway"/>
    <property type="evidence" value="ECO:0000318"/>
    <property type="project" value="GO_Central"/>
</dbReference>
<dbReference type="GO" id="GO:0030032">
    <property type="term" value="P:lamellipodium assembly"/>
    <property type="evidence" value="ECO:0007669"/>
    <property type="project" value="Ensembl"/>
</dbReference>
<dbReference type="GO" id="GO:0046627">
    <property type="term" value="P:negative regulation of insulin receptor signaling pathway"/>
    <property type="evidence" value="ECO:0000315"/>
    <property type="project" value="FlyBase"/>
</dbReference>
<dbReference type="GO" id="GO:1903898">
    <property type="term" value="P:negative regulation of PERK-mediated unfolded protein response"/>
    <property type="evidence" value="ECO:0000314"/>
    <property type="project" value="ParkinsonsUK-UCL"/>
</dbReference>
<dbReference type="GO" id="GO:0050860">
    <property type="term" value="P:negative regulation of T cell receptor signaling pathway"/>
    <property type="evidence" value="ECO:0000314"/>
    <property type="project" value="UniProt"/>
</dbReference>
<dbReference type="GO" id="GO:0000122">
    <property type="term" value="P:negative regulation of transcription by RNA polymerase II"/>
    <property type="evidence" value="ECO:0000314"/>
    <property type="project" value="ParkinsonsUK-UCL"/>
</dbReference>
<dbReference type="GO" id="GO:0030838">
    <property type="term" value="P:positive regulation of actin filament polymerization"/>
    <property type="evidence" value="ECO:0000315"/>
    <property type="project" value="UniProtKB"/>
</dbReference>
<dbReference type="GO" id="GO:1903676">
    <property type="term" value="P:positive regulation of cap-dependent translational initiation"/>
    <property type="evidence" value="ECO:0000314"/>
    <property type="project" value="ParkinsonsUK-UCL"/>
</dbReference>
<dbReference type="GO" id="GO:1903679">
    <property type="term" value="P:positive regulation of cap-independent translational initiation"/>
    <property type="evidence" value="ECO:0000314"/>
    <property type="project" value="ParkinsonsUK-UCL"/>
</dbReference>
<dbReference type="GO" id="GO:1902237">
    <property type="term" value="P:positive regulation of endoplasmic reticulum stress-induced intrinsic apoptotic signaling pathway"/>
    <property type="evidence" value="ECO:0000314"/>
    <property type="project" value="ParkinsonsUK-UCL"/>
</dbReference>
<dbReference type="GO" id="GO:0010976">
    <property type="term" value="P:positive regulation of neuron projection development"/>
    <property type="evidence" value="ECO:0007669"/>
    <property type="project" value="Ensembl"/>
</dbReference>
<dbReference type="GO" id="GO:0042102">
    <property type="term" value="P:positive regulation of T cell proliferation"/>
    <property type="evidence" value="ECO:0000315"/>
    <property type="project" value="UniProtKB"/>
</dbReference>
<dbReference type="GO" id="GO:0045944">
    <property type="term" value="P:positive regulation of transcription by RNA polymerase II"/>
    <property type="evidence" value="ECO:0000314"/>
    <property type="project" value="UniProtKB"/>
</dbReference>
<dbReference type="GO" id="GO:0036493">
    <property type="term" value="P:positive regulation of translation in response to endoplasmic reticulum stress"/>
    <property type="evidence" value="ECO:0000314"/>
    <property type="project" value="ParkinsonsUK-UCL"/>
</dbReference>
<dbReference type="GO" id="GO:0030334">
    <property type="term" value="P:regulation of cell migration"/>
    <property type="evidence" value="ECO:0007669"/>
    <property type="project" value="Ensembl"/>
</dbReference>
<dbReference type="GO" id="GO:0036491">
    <property type="term" value="P:regulation of translation initiation in response to endoplasmic reticulum stress"/>
    <property type="evidence" value="ECO:0000314"/>
    <property type="project" value="ParkinsonsUK-UCL"/>
</dbReference>
<dbReference type="GO" id="GO:0034976">
    <property type="term" value="P:response to endoplasmic reticulum stress"/>
    <property type="evidence" value="ECO:0000314"/>
    <property type="project" value="ParkinsonsUK-UCL"/>
</dbReference>
<dbReference type="GO" id="GO:0007172">
    <property type="term" value="P:signal complex assembly"/>
    <property type="evidence" value="ECO:0000303"/>
    <property type="project" value="UniProtKB"/>
</dbReference>
<dbReference type="GO" id="GO:0006930">
    <property type="term" value="P:substrate-dependent cell migration, cell extension"/>
    <property type="evidence" value="ECO:0007669"/>
    <property type="project" value="Ensembl"/>
</dbReference>
<dbReference type="GO" id="GO:0042110">
    <property type="term" value="P:T cell activation"/>
    <property type="evidence" value="ECO:0000315"/>
    <property type="project" value="UniProtKB"/>
</dbReference>
<dbReference type="CDD" id="cd10408">
    <property type="entry name" value="SH2_Nck1"/>
    <property type="match status" value="1"/>
</dbReference>
<dbReference type="CDD" id="cd11900">
    <property type="entry name" value="SH3_Nck1_1"/>
    <property type="match status" value="1"/>
</dbReference>
<dbReference type="CDD" id="cd11901">
    <property type="entry name" value="SH3_Nck1_2"/>
    <property type="match status" value="1"/>
</dbReference>
<dbReference type="CDD" id="cd11904">
    <property type="entry name" value="SH3_Nck1_3"/>
    <property type="match status" value="1"/>
</dbReference>
<dbReference type="FunFam" id="2.30.30.40:FF:000061">
    <property type="entry name" value="Cytoplasmic protein"/>
    <property type="match status" value="1"/>
</dbReference>
<dbReference type="FunFam" id="2.30.30.40:FF:000110">
    <property type="entry name" value="Cytoplasmic protein"/>
    <property type="match status" value="1"/>
</dbReference>
<dbReference type="FunFam" id="2.30.30.40:FF:000126">
    <property type="entry name" value="Cytoplasmic protein"/>
    <property type="match status" value="1"/>
</dbReference>
<dbReference type="FunFam" id="3.30.505.10:FF:000027">
    <property type="entry name" value="Cytoplasmic protein nck1"/>
    <property type="match status" value="1"/>
</dbReference>
<dbReference type="Gene3D" id="3.30.505.10">
    <property type="entry name" value="SH2 domain"/>
    <property type="match status" value="1"/>
</dbReference>
<dbReference type="Gene3D" id="2.30.30.40">
    <property type="entry name" value="SH3 Domains"/>
    <property type="match status" value="3"/>
</dbReference>
<dbReference type="InterPro" id="IPR017304">
    <property type="entry name" value="NCK"/>
</dbReference>
<dbReference type="InterPro" id="IPR035882">
    <property type="entry name" value="Nck1_SH2"/>
</dbReference>
<dbReference type="InterPro" id="IPR035562">
    <property type="entry name" value="Nck1_SH3_1"/>
</dbReference>
<dbReference type="InterPro" id="IPR035564">
    <property type="entry name" value="Nck1_SH3_2"/>
</dbReference>
<dbReference type="InterPro" id="IPR035565">
    <property type="entry name" value="Nck1_SH3_3"/>
</dbReference>
<dbReference type="InterPro" id="IPR000980">
    <property type="entry name" value="SH2"/>
</dbReference>
<dbReference type="InterPro" id="IPR036860">
    <property type="entry name" value="SH2_dom_sf"/>
</dbReference>
<dbReference type="InterPro" id="IPR036028">
    <property type="entry name" value="SH3-like_dom_sf"/>
</dbReference>
<dbReference type="InterPro" id="IPR001452">
    <property type="entry name" value="SH3_domain"/>
</dbReference>
<dbReference type="InterPro" id="IPR051184">
    <property type="entry name" value="Tyrosine-phos_adapter"/>
</dbReference>
<dbReference type="PANTHER" id="PTHR19969:SF16">
    <property type="entry name" value="CYTOPLASMIC PROTEIN NCK1"/>
    <property type="match status" value="1"/>
</dbReference>
<dbReference type="PANTHER" id="PTHR19969">
    <property type="entry name" value="SH2-SH3 ADAPTOR PROTEIN-RELATED"/>
    <property type="match status" value="1"/>
</dbReference>
<dbReference type="Pfam" id="PF00017">
    <property type="entry name" value="SH2"/>
    <property type="match status" value="1"/>
</dbReference>
<dbReference type="Pfam" id="PF00018">
    <property type="entry name" value="SH3_1"/>
    <property type="match status" value="3"/>
</dbReference>
<dbReference type="PIRSF" id="PIRSF037874">
    <property type="entry name" value="Cytoplasmic_NCK"/>
    <property type="match status" value="1"/>
</dbReference>
<dbReference type="PRINTS" id="PR00401">
    <property type="entry name" value="SH2DOMAIN"/>
</dbReference>
<dbReference type="PRINTS" id="PR00452">
    <property type="entry name" value="SH3DOMAIN"/>
</dbReference>
<dbReference type="SMART" id="SM00252">
    <property type="entry name" value="SH2"/>
    <property type="match status" value="1"/>
</dbReference>
<dbReference type="SMART" id="SM00326">
    <property type="entry name" value="SH3"/>
    <property type="match status" value="3"/>
</dbReference>
<dbReference type="SUPFAM" id="SSF55550">
    <property type="entry name" value="SH2 domain"/>
    <property type="match status" value="1"/>
</dbReference>
<dbReference type="SUPFAM" id="SSF50044">
    <property type="entry name" value="SH3-domain"/>
    <property type="match status" value="3"/>
</dbReference>
<dbReference type="PROSITE" id="PS50001">
    <property type="entry name" value="SH2"/>
    <property type="match status" value="1"/>
</dbReference>
<dbReference type="PROSITE" id="PS50002">
    <property type="entry name" value="SH3"/>
    <property type="match status" value="3"/>
</dbReference>
<organism>
    <name type="scientific">Homo sapiens</name>
    <name type="common">Human</name>
    <dbReference type="NCBI Taxonomy" id="9606"/>
    <lineage>
        <taxon>Eukaryota</taxon>
        <taxon>Metazoa</taxon>
        <taxon>Chordata</taxon>
        <taxon>Craniata</taxon>
        <taxon>Vertebrata</taxon>
        <taxon>Euteleostomi</taxon>
        <taxon>Mammalia</taxon>
        <taxon>Eutheria</taxon>
        <taxon>Euarchontoglires</taxon>
        <taxon>Primates</taxon>
        <taxon>Haplorrhini</taxon>
        <taxon>Catarrhini</taxon>
        <taxon>Hominidae</taxon>
        <taxon>Homo</taxon>
    </lineage>
</organism>
<feature type="initiator methionine" description="Removed" evidence="32 33">
    <location>
        <position position="1"/>
    </location>
</feature>
<feature type="chain" id="PRO_0000096766" description="SH2/SH3 adapter protein NCK1">
    <location>
        <begin position="2"/>
        <end position="377"/>
    </location>
</feature>
<feature type="domain" description="SH3 1" evidence="2">
    <location>
        <begin position="2"/>
        <end position="61"/>
    </location>
</feature>
<feature type="domain" description="SH3 2" evidence="2">
    <location>
        <begin position="106"/>
        <end position="165"/>
    </location>
</feature>
<feature type="domain" description="SH3 3" evidence="2">
    <location>
        <begin position="190"/>
        <end position="252"/>
    </location>
</feature>
<feature type="domain" description="SH2" evidence="1">
    <location>
        <begin position="282"/>
        <end position="376"/>
    </location>
</feature>
<feature type="modified residue" description="N-acetylalanine" evidence="32 33">
    <location>
        <position position="2"/>
    </location>
</feature>
<feature type="modified residue" description="Phosphoserine" evidence="29 30 34 35">
    <location>
        <position position="85"/>
    </location>
</feature>
<feature type="modified residue" description="Phosphoserine" evidence="35">
    <location>
        <position position="89"/>
    </location>
</feature>
<feature type="modified residue" description="Phosphoserine" evidence="29 34">
    <location>
        <position position="91"/>
    </location>
</feature>
<feature type="modified residue" description="Phosphoserine" evidence="29 34">
    <location>
        <position position="96"/>
    </location>
</feature>
<feature type="modified residue" description="Phosphotyrosine" evidence="28 30 31">
    <location>
        <position position="105"/>
    </location>
</feature>
<feature type="modified residue" description="Phosphoserine" evidence="34 35">
    <location>
        <position position="166"/>
    </location>
</feature>
<feature type="splice variant" id="VSP_043122" description="In isoform 2." evidence="26">
    <original>MAEEVVVVAKFDYVAQQEQELDIKKNERLWLLDDSKSWWRVRNSMNKTGFVPSNYVERKNSARKASIVKNLKDTLG</original>
    <variation>MDWLNVFKDFFS</variation>
    <location>
        <begin position="1"/>
        <end position="76"/>
    </location>
</feature>
<feature type="sequence variant" id="VAR_051228" description="In dbSNP:rs13320485.">
    <original>A</original>
    <variation>V</variation>
    <location>
        <position position="180"/>
    </location>
</feature>
<feature type="mutagenesis site" description="Small decrease in RASA1-binding. Almost complete loss of RASA1-binding; when associated with K-143 and K-229." evidence="17">
    <original>W</original>
    <variation>K</variation>
    <location>
        <position position="38"/>
    </location>
</feature>
<feature type="mutagenesis site" description="No effect on RASA1-binding. Almost complete loss of RASA1-binding; when associated with K-38 and K-229." evidence="17">
    <original>W</original>
    <variation>K</variation>
    <location>
        <position position="143"/>
    </location>
</feature>
<feature type="mutagenesis site" description="Small decrease in RASA1-binding. Almost complete loss of RASA1-binding; when associated with K-38 and K-229." evidence="17">
    <original>W</original>
    <variation>K</variation>
    <location>
        <position position="229"/>
    </location>
</feature>
<feature type="mutagenesis site" description="No effect on RASA1-binding." evidence="17">
    <original>R</original>
    <variation>K</variation>
    <location>
        <position position="308"/>
    </location>
</feature>
<feature type="strand" evidence="39">
    <location>
        <begin position="5"/>
        <end position="8"/>
    </location>
</feature>
<feature type="strand" evidence="39">
    <location>
        <begin position="28"/>
        <end position="31"/>
    </location>
</feature>
<feature type="helix" evidence="39">
    <location>
        <begin position="33"/>
        <end position="35"/>
    </location>
</feature>
<feature type="strand" evidence="39">
    <location>
        <begin position="38"/>
        <end position="42"/>
    </location>
</feature>
<feature type="strand" evidence="39">
    <location>
        <begin position="48"/>
        <end position="52"/>
    </location>
</feature>
<feature type="helix" evidence="39">
    <location>
        <begin position="53"/>
        <end position="55"/>
    </location>
</feature>
<feature type="strand" evidence="38">
    <location>
        <begin position="56"/>
        <end position="58"/>
    </location>
</feature>
<feature type="strand" evidence="37">
    <location>
        <begin position="99"/>
        <end position="101"/>
    </location>
</feature>
<feature type="strand" evidence="37">
    <location>
        <begin position="109"/>
        <end position="115"/>
    </location>
</feature>
<feature type="strand" evidence="37">
    <location>
        <begin position="131"/>
        <end position="138"/>
    </location>
</feature>
<feature type="strand" evidence="37">
    <location>
        <begin position="142"/>
        <end position="148"/>
    </location>
</feature>
<feature type="strand" evidence="37">
    <location>
        <begin position="151"/>
        <end position="156"/>
    </location>
</feature>
<feature type="helix" evidence="37">
    <location>
        <begin position="157"/>
        <end position="159"/>
    </location>
</feature>
<feature type="strand" evidence="37">
    <location>
        <begin position="160"/>
        <end position="162"/>
    </location>
</feature>
<feature type="strand" evidence="37">
    <location>
        <begin position="168"/>
        <end position="170"/>
    </location>
</feature>
<feature type="helix" evidence="36">
    <location>
        <begin position="289"/>
        <end position="299"/>
    </location>
</feature>
<feature type="strand" evidence="36">
    <location>
        <begin position="304"/>
        <end position="309"/>
    </location>
</feature>
<feature type="strand" evidence="36">
    <location>
        <begin position="311"/>
        <end position="313"/>
    </location>
</feature>
<feature type="strand" evidence="36">
    <location>
        <begin position="316"/>
        <end position="321"/>
    </location>
</feature>
<feature type="strand" evidence="36">
    <location>
        <begin position="324"/>
        <end position="326"/>
    </location>
</feature>
<feature type="strand" evidence="36">
    <location>
        <begin position="328"/>
        <end position="335"/>
    </location>
</feature>
<feature type="strand" evidence="36">
    <location>
        <begin position="338"/>
        <end position="341"/>
    </location>
</feature>
<feature type="strand" evidence="36">
    <location>
        <begin position="344"/>
        <end position="348"/>
    </location>
</feature>
<feature type="helix" evidence="36">
    <location>
        <begin position="349"/>
        <end position="358"/>
    </location>
</feature>
<feature type="strand" evidence="36">
    <location>
        <begin position="361"/>
        <end position="363"/>
    </location>
</feature>
<sequence>MAEEVVVVAKFDYVAQQEQELDIKKNERLWLLDDSKSWWRVRNSMNKTGFVPSNYVERKNSARKASIVKNLKDTLGIGKVKRKPSVPDSASPADDSFVDPGERLYDLNMPAYVKFNYMAEREDELSLIKGTKVIVMEKCSDGWWRGSYNGQVGWFPSNYVTEEGDSPLGDHVGSLSEKLAAVVNNLNTGQVLHVVQALYPFSSSNDEELNFEKGDVMDVIEKPENDPEWWKCRKINGMVGLVPKNYVTVMQNNPLTSGLEPSPPQCDYIRPSLTGKFAGNPWYYGKVTRHQAEMALNERGHEGDFLIRDSESSPNDFSVSLKAQGKNKHFKVQLKETVYCIGQRKFSTMEELVEHYKKAPIFTSEQGEKLYLVKHLS</sequence>